<organism>
    <name type="scientific">Homo sapiens</name>
    <name type="common">Human</name>
    <dbReference type="NCBI Taxonomy" id="9606"/>
    <lineage>
        <taxon>Eukaryota</taxon>
        <taxon>Metazoa</taxon>
        <taxon>Chordata</taxon>
        <taxon>Craniata</taxon>
        <taxon>Vertebrata</taxon>
        <taxon>Euteleostomi</taxon>
        <taxon>Mammalia</taxon>
        <taxon>Eutheria</taxon>
        <taxon>Euarchontoglires</taxon>
        <taxon>Primates</taxon>
        <taxon>Haplorrhini</taxon>
        <taxon>Catarrhini</taxon>
        <taxon>Hominidae</taxon>
        <taxon>Homo</taxon>
    </lineage>
</organism>
<accession>Q6P2Q9</accession>
<accession>O14547</accession>
<accession>O75965</accession>
<feature type="initiator methionine" description="Removed" evidence="42 65 68">
    <location>
        <position position="1"/>
    </location>
</feature>
<feature type="chain" id="PRO_0000097040" description="Pre-mRNA-processing-splicing factor 8">
    <location>
        <begin position="2"/>
        <end position="2335"/>
    </location>
</feature>
<feature type="domain" description="MPN" evidence="2">
    <location>
        <begin position="2103"/>
        <end position="2234"/>
    </location>
</feature>
<feature type="region of interest" description="Reverse transcriptase homology domain">
    <location>
        <begin position="812"/>
        <end position="1303"/>
    </location>
</feature>
<feature type="region of interest" description="Linker">
    <location>
        <begin position="1304"/>
        <end position="1577"/>
    </location>
</feature>
<feature type="region of interest" description="Important for branch point selection" evidence="1">
    <location>
        <begin position="1513"/>
        <end position="1526"/>
    </location>
</feature>
<feature type="region of interest" description="Restriction endonuclease homology domain">
    <location>
        <begin position="1581"/>
        <end position="1752"/>
    </location>
</feature>
<feature type="region of interest" description="Involved in interaction with pre-mRNA 5' splice site">
    <location>
        <begin position="1669"/>
        <end position="2034"/>
    </location>
</feature>
<feature type="region of interest" description="RNase H homology domain">
    <location>
        <begin position="1767"/>
        <end position="2020"/>
    </location>
</feature>
<feature type="region of interest" description="Required for interaction with EFTUD2 and SNRNP200" evidence="14">
    <location>
        <begin position="2301"/>
        <end position="2335"/>
    </location>
</feature>
<feature type="modified residue" description="N-acetylalanine" evidence="42 65 68">
    <location>
        <position position="2"/>
    </location>
</feature>
<feature type="modified residue" description="Phosphoserine" evidence="67">
    <location>
        <position position="859"/>
    </location>
</feature>
<feature type="modified residue" description="Phosphoserine" evidence="69">
    <location>
        <position position="1358"/>
    </location>
</feature>
<feature type="modified residue" description="N6,N6-dimethyllysine" evidence="70">
    <location>
        <position position="1425"/>
    </location>
</feature>
<feature type="modified residue" description="N6-acetyllysine" evidence="66">
    <location>
        <position position="1463"/>
    </location>
</feature>
<feature type="sequence variant" id="VAR_022622" description="In dbSNP:rs1043391." evidence="41">
    <original>K</original>
    <variation>E</variation>
    <location>
        <position position="68"/>
    </location>
</feature>
<feature type="sequence variant" id="VAR_022623" description="In dbSNP:rs11559304." evidence="12">
    <original>R</original>
    <variation>H</variation>
    <location>
        <position position="227"/>
    </location>
</feature>
<feature type="sequence variant" id="VAR_022624" description="In dbSNP:rs1043396." evidence="41">
    <original>P</original>
    <variation>L</variation>
    <location>
        <position position="874"/>
    </location>
</feature>
<feature type="sequence variant" id="VAR_022625" description="In dbSNP:rs1043399." evidence="41">
    <original>N</original>
    <variation>H</variation>
    <location>
        <position position="1293"/>
    </location>
</feature>
<feature type="sequence variant" id="VAR_022626" description="In RP13; no effect on interaction with SNRNP200 and EFTUD2; dbSNP:rs121434239." evidence="8">
    <original>P</original>
    <variation>T</variation>
    <location>
        <position position="2301"/>
    </location>
</feature>
<feature type="sequence variant" id="VAR_022627" description="In RP13; dbSNP:rs121434240." evidence="8 14">
    <original>F</original>
    <variation>L</variation>
    <location>
        <position position="2304"/>
    </location>
</feature>
<feature type="sequence variant" id="VAR_022628" description="In RP13; no effect on interaction with SNRNP200 and EFTUD2; dbSNP:rs121434236." evidence="8 14">
    <original>H</original>
    <variation>P</variation>
    <location>
        <position position="2309"/>
    </location>
</feature>
<feature type="sequence variant" id="VAR_022629" description="In RP13; no effect on interaction with SNRNP200 and EFTUD2; dbSNP:rs121434236." evidence="8 14">
    <original>H</original>
    <variation>R</variation>
    <location>
        <position position="2309"/>
    </location>
</feature>
<feature type="sequence variant" id="VAR_022630" description="In RP13; reduces interaction with SNRNP200 and EFTUD2." evidence="8 11 14 43">
    <original>R</original>
    <variation>G</variation>
    <location>
        <position position="2310"/>
    </location>
</feature>
<feature type="sequence variant" id="VAR_022631" description="In RP13; reduces interaction with SNRNP200 and EFTUD2; dbSNP:rs121434238." evidence="8 9 14">
    <original>R</original>
    <variation>K</variation>
    <location>
        <position position="2310"/>
    </location>
</feature>
<feature type="sequence variant" id="VAR_022632" description="In RP13; reduces interaction with EFTUD2, but not with SNRNP200." evidence="8 14">
    <original>F</original>
    <variation>L</variation>
    <location>
        <position position="2314"/>
    </location>
</feature>
<feature type="sequence variant" id="VAR_022633" description="In RP13." evidence="43">
    <original>Y</original>
    <variation>N</variation>
    <location>
        <position position="2334"/>
    </location>
</feature>
<feature type="mutagenesis site" description="Strongly reduced interaction with RNA." evidence="15">
    <original>V</original>
    <variation>D</variation>
    <location>
        <position position="1788"/>
    </location>
</feature>
<feature type="mutagenesis site" description="Strongly reduced interaction with RNA." evidence="15">
    <original>T</original>
    <variation>P</variation>
    <location>
        <position position="1789"/>
    </location>
</feature>
<feature type="sequence conflict" description="In Ref. 2; BAA22563." evidence="45" ref="2">
    <original>D</original>
    <variation>N</variation>
    <location>
        <position position="184"/>
    </location>
</feature>
<feature type="sequence conflict" description="In Ref. 2; BAA22563." evidence="45" ref="2">
    <original>VG</original>
    <variation>GW</variation>
    <location>
        <begin position="492"/>
        <end position="493"/>
    </location>
</feature>
<feature type="sequence conflict" description="In Ref. 2; BAA22563." evidence="45" ref="2">
    <original>M</original>
    <variation>V</variation>
    <location>
        <position position="604"/>
    </location>
</feature>
<feature type="sequence conflict" description="In Ref. 2; BAA22563." evidence="45" ref="2">
    <original>A</original>
    <variation>T</variation>
    <location>
        <position position="806"/>
    </location>
</feature>
<feature type="sequence conflict" description="In Ref. 2; BAA22563." evidence="45" ref="2">
    <original>L</original>
    <variation>V</variation>
    <location>
        <position position="997"/>
    </location>
</feature>
<feature type="sequence conflict" description="In Ref. 2; BAA22563." evidence="45" ref="2">
    <original>A</original>
    <variation>S</variation>
    <location>
        <position position="1390"/>
    </location>
</feature>
<feature type="sequence conflict" description="In Ref. 2; BAA22563." evidence="45" ref="2">
    <original>G</original>
    <variation>D</variation>
    <location>
        <position position="1867"/>
    </location>
</feature>
<feature type="helix" evidence="76">
    <location>
        <begin position="27"/>
        <end position="44"/>
    </location>
</feature>
<feature type="helix" evidence="76">
    <location>
        <begin position="47"/>
        <end position="49"/>
    </location>
</feature>
<feature type="strand" evidence="78">
    <location>
        <begin position="55"/>
        <end position="57"/>
    </location>
</feature>
<feature type="helix" evidence="76">
    <location>
        <begin position="64"/>
        <end position="72"/>
    </location>
</feature>
<feature type="helix" evidence="78">
    <location>
        <begin position="74"/>
        <end position="76"/>
    </location>
</feature>
<feature type="helix" evidence="85">
    <location>
        <begin position="79"/>
        <end position="81"/>
    </location>
</feature>
<feature type="helix" evidence="76">
    <location>
        <begin position="82"/>
        <end position="84"/>
    </location>
</feature>
<feature type="helix" evidence="76">
    <location>
        <begin position="85"/>
        <end position="91"/>
    </location>
</feature>
<feature type="helix" evidence="76">
    <location>
        <begin position="92"/>
        <end position="94"/>
    </location>
</feature>
<feature type="helix" evidence="76">
    <location>
        <begin position="95"/>
        <end position="104"/>
    </location>
</feature>
<feature type="strand" evidence="76">
    <location>
        <begin position="115"/>
        <end position="121"/>
    </location>
</feature>
<feature type="strand" evidence="76">
    <location>
        <begin position="127"/>
        <end position="129"/>
    </location>
</feature>
<feature type="helix" evidence="76">
    <location>
        <begin position="137"/>
        <end position="156"/>
    </location>
</feature>
<feature type="strand" evidence="78">
    <location>
        <begin position="166"/>
        <end position="169"/>
    </location>
</feature>
<feature type="strand" evidence="78">
    <location>
        <begin position="171"/>
        <end position="173"/>
    </location>
</feature>
<feature type="helix" evidence="76">
    <location>
        <begin position="178"/>
        <end position="181"/>
    </location>
</feature>
<feature type="turn" evidence="76">
    <location>
        <begin position="182"/>
        <end position="184"/>
    </location>
</feature>
<feature type="turn" evidence="76">
    <location>
        <begin position="197"/>
        <end position="208"/>
    </location>
</feature>
<feature type="strand" evidence="76">
    <location>
        <begin position="209"/>
        <end position="211"/>
    </location>
</feature>
<feature type="turn" evidence="74">
    <location>
        <begin position="212"/>
        <end position="215"/>
    </location>
</feature>
<feature type="turn" evidence="76">
    <location>
        <begin position="217"/>
        <end position="219"/>
    </location>
</feature>
<feature type="turn" evidence="76">
    <location>
        <begin position="222"/>
        <end position="224"/>
    </location>
</feature>
<feature type="strand" evidence="76">
    <location>
        <begin position="227"/>
        <end position="229"/>
    </location>
</feature>
<feature type="helix" evidence="76">
    <location>
        <begin position="232"/>
        <end position="241"/>
    </location>
</feature>
<feature type="turn" evidence="76">
    <location>
        <begin position="243"/>
        <end position="245"/>
    </location>
</feature>
<feature type="helix" evidence="76">
    <location>
        <begin position="252"/>
        <end position="255"/>
    </location>
</feature>
<feature type="strand" evidence="76">
    <location>
        <begin position="256"/>
        <end position="259"/>
    </location>
</feature>
<feature type="helix" evidence="76">
    <location>
        <begin position="260"/>
        <end position="268"/>
    </location>
</feature>
<feature type="strand" evidence="74">
    <location>
        <begin position="274"/>
        <end position="276"/>
    </location>
</feature>
<feature type="turn" evidence="86">
    <location>
        <begin position="288"/>
        <end position="290"/>
    </location>
</feature>
<feature type="helix" evidence="81">
    <location>
        <begin position="295"/>
        <end position="297"/>
    </location>
</feature>
<feature type="helix" evidence="85">
    <location>
        <begin position="299"/>
        <end position="301"/>
    </location>
</feature>
<feature type="helix" evidence="76">
    <location>
        <begin position="312"/>
        <end position="315"/>
    </location>
</feature>
<feature type="turn" evidence="76">
    <location>
        <begin position="317"/>
        <end position="320"/>
    </location>
</feature>
<feature type="strand" evidence="74">
    <location>
        <begin position="345"/>
        <end position="347"/>
    </location>
</feature>
<feature type="strand" evidence="74">
    <location>
        <begin position="354"/>
        <end position="356"/>
    </location>
</feature>
<feature type="strand" evidence="74">
    <location>
        <begin position="374"/>
        <end position="377"/>
    </location>
</feature>
<feature type="helix" evidence="77">
    <location>
        <begin position="381"/>
        <end position="383"/>
    </location>
</feature>
<feature type="strand" evidence="75">
    <location>
        <begin position="389"/>
        <end position="391"/>
    </location>
</feature>
<feature type="helix" evidence="76">
    <location>
        <begin position="398"/>
        <end position="405"/>
    </location>
</feature>
<feature type="turn" evidence="76">
    <location>
        <begin position="409"/>
        <end position="412"/>
    </location>
</feature>
<feature type="strand" evidence="76">
    <location>
        <begin position="414"/>
        <end position="417"/>
    </location>
</feature>
<feature type="strand" evidence="78">
    <location>
        <begin position="419"/>
        <end position="421"/>
    </location>
</feature>
<feature type="helix" evidence="76">
    <location>
        <begin position="428"/>
        <end position="432"/>
    </location>
</feature>
<feature type="strand" evidence="74">
    <location>
        <begin position="437"/>
        <end position="439"/>
    </location>
</feature>
<feature type="helix" evidence="76">
    <location>
        <begin position="441"/>
        <end position="459"/>
    </location>
</feature>
<feature type="helix" evidence="76">
    <location>
        <begin position="472"/>
        <end position="476"/>
    </location>
</feature>
<feature type="strand" evidence="76">
    <location>
        <begin position="479"/>
        <end position="488"/>
    </location>
</feature>
<feature type="helix" evidence="76">
    <location>
        <begin position="489"/>
        <end position="510"/>
    </location>
</feature>
<feature type="strand" evidence="76">
    <location>
        <begin position="516"/>
        <end position="518"/>
    </location>
</feature>
<feature type="strand" evidence="73">
    <location>
        <begin position="520"/>
        <end position="522"/>
    </location>
</feature>
<feature type="strand" evidence="76">
    <location>
        <begin position="524"/>
        <end position="528"/>
    </location>
</feature>
<feature type="helix" evidence="76">
    <location>
        <begin position="532"/>
        <end position="537"/>
    </location>
</feature>
<feature type="helix" evidence="76">
    <location>
        <begin position="542"/>
        <end position="565"/>
    </location>
</feature>
<feature type="helix" evidence="76">
    <location>
        <begin position="572"/>
        <end position="583"/>
    </location>
</feature>
<feature type="helix" evidence="76">
    <location>
        <begin position="585"/>
        <end position="588"/>
    </location>
</feature>
<feature type="helix" evidence="76">
    <location>
        <begin position="591"/>
        <end position="593"/>
    </location>
</feature>
<feature type="helix" evidence="76">
    <location>
        <begin position="596"/>
        <end position="598"/>
    </location>
</feature>
<feature type="helix" evidence="76">
    <location>
        <begin position="599"/>
        <end position="616"/>
    </location>
</feature>
<feature type="strand" evidence="76">
    <location>
        <begin position="619"/>
        <end position="621"/>
    </location>
</feature>
<feature type="strand" evidence="76">
    <location>
        <begin position="623"/>
        <end position="625"/>
    </location>
</feature>
<feature type="helix" evidence="76">
    <location>
        <begin position="631"/>
        <end position="661"/>
    </location>
</feature>
<feature type="strand" evidence="76">
    <location>
        <begin position="674"/>
        <end position="676"/>
    </location>
</feature>
<feature type="helix" evidence="76">
    <location>
        <begin position="677"/>
        <end position="696"/>
    </location>
</feature>
<feature type="turn" evidence="85">
    <location>
        <begin position="699"/>
        <end position="701"/>
    </location>
</feature>
<feature type="helix" evidence="76">
    <location>
        <begin position="706"/>
        <end position="721"/>
    </location>
</feature>
<feature type="strand" evidence="86">
    <location>
        <begin position="729"/>
        <end position="731"/>
    </location>
</feature>
<feature type="helix" evidence="76">
    <location>
        <begin position="733"/>
        <end position="763"/>
    </location>
</feature>
<feature type="helix" evidence="76">
    <location>
        <begin position="769"/>
        <end position="796"/>
    </location>
</feature>
<feature type="turn" evidence="81">
    <location>
        <begin position="800"/>
        <end position="803"/>
    </location>
</feature>
<feature type="helix" evidence="76">
    <location>
        <begin position="804"/>
        <end position="819"/>
    </location>
</feature>
<feature type="helix" evidence="76">
    <location>
        <begin position="835"/>
        <end position="847"/>
    </location>
</feature>
<feature type="helix" evidence="76">
    <location>
        <begin position="849"/>
        <end position="851"/>
    </location>
</feature>
<feature type="helix" evidence="76">
    <location>
        <begin position="858"/>
        <end position="872"/>
    </location>
</feature>
<feature type="helix" evidence="76">
    <location>
        <begin position="874"/>
        <end position="886"/>
    </location>
</feature>
<feature type="strand" evidence="76">
    <location>
        <begin position="894"/>
        <end position="900"/>
    </location>
</feature>
<feature type="strand" evidence="76">
    <location>
        <begin position="902"/>
        <end position="910"/>
    </location>
</feature>
<feature type="helix" evidence="76">
    <location>
        <begin position="913"/>
        <end position="932"/>
    </location>
</feature>
<feature type="strand" evidence="78">
    <location>
        <begin position="940"/>
        <end position="942"/>
    </location>
</feature>
<feature type="strand" evidence="81">
    <location>
        <begin position="944"/>
        <end position="946"/>
    </location>
</feature>
<feature type="helix" evidence="76">
    <location>
        <begin position="948"/>
        <end position="960"/>
    </location>
</feature>
<feature type="turn" evidence="78">
    <location>
        <begin position="963"/>
        <end position="966"/>
    </location>
</feature>
<feature type="strand" evidence="74">
    <location>
        <begin position="969"/>
        <end position="971"/>
    </location>
</feature>
<feature type="strand" evidence="76">
    <location>
        <begin position="972"/>
        <end position="980"/>
    </location>
</feature>
<feature type="turn" evidence="76">
    <location>
        <begin position="982"/>
        <end position="987"/>
    </location>
</feature>
<feature type="helix" evidence="76">
    <location>
        <begin position="990"/>
        <end position="1000"/>
    </location>
</feature>
<feature type="helix" evidence="76">
    <location>
        <begin position="1003"/>
        <end position="1013"/>
    </location>
</feature>
<feature type="strand" evidence="76">
    <location>
        <begin position="1016"/>
        <end position="1019"/>
    </location>
</feature>
<feature type="strand" evidence="76">
    <location>
        <begin position="1022"/>
        <end position="1025"/>
    </location>
</feature>
<feature type="strand" evidence="76">
    <location>
        <begin position="1027"/>
        <end position="1029"/>
    </location>
</feature>
<feature type="helix" evidence="76">
    <location>
        <begin position="1037"/>
        <end position="1053"/>
    </location>
</feature>
<feature type="helix" evidence="76">
    <location>
        <begin position="1055"/>
        <end position="1062"/>
    </location>
</feature>
<feature type="strand" evidence="76">
    <location>
        <begin position="1065"/>
        <end position="1067"/>
    </location>
</feature>
<feature type="helix" evidence="76">
    <location>
        <begin position="1077"/>
        <end position="1080"/>
    </location>
</feature>
<feature type="strand" evidence="76">
    <location>
        <begin position="1083"/>
        <end position="1091"/>
    </location>
</feature>
<feature type="strand" evidence="76">
    <location>
        <begin position="1094"/>
        <end position="1102"/>
    </location>
</feature>
<feature type="helix" evidence="76">
    <location>
        <begin position="1103"/>
        <end position="1116"/>
    </location>
</feature>
<feature type="helix" evidence="76">
    <location>
        <begin position="1123"/>
        <end position="1125"/>
    </location>
</feature>
<feature type="strand" evidence="76">
    <location>
        <begin position="1132"/>
        <end position="1134"/>
    </location>
</feature>
<feature type="turn" evidence="76">
    <location>
        <begin position="1136"/>
        <end position="1138"/>
    </location>
</feature>
<feature type="helix" evidence="76">
    <location>
        <begin position="1144"/>
        <end position="1158"/>
    </location>
</feature>
<feature type="strand" evidence="73">
    <location>
        <begin position="1159"/>
        <end position="1161"/>
    </location>
</feature>
<feature type="turn" evidence="76">
    <location>
        <begin position="1163"/>
        <end position="1165"/>
    </location>
</feature>
<feature type="turn" evidence="76">
    <location>
        <begin position="1170"/>
        <end position="1172"/>
    </location>
</feature>
<feature type="strand" evidence="76">
    <location>
        <begin position="1174"/>
        <end position="1178"/>
    </location>
</feature>
<feature type="strand" evidence="76">
    <location>
        <begin position="1185"/>
        <end position="1188"/>
    </location>
</feature>
<feature type="strand" evidence="76">
    <location>
        <begin position="1190"/>
        <end position="1202"/>
    </location>
</feature>
<feature type="helix" evidence="78">
    <location>
        <begin position="1203"/>
        <end position="1205"/>
    </location>
</feature>
<feature type="strand" evidence="73">
    <location>
        <begin position="1209"/>
        <end position="1212"/>
    </location>
</feature>
<feature type="strand" evidence="76">
    <location>
        <begin position="1213"/>
        <end position="1217"/>
    </location>
</feature>
<feature type="turn" evidence="76">
    <location>
        <begin position="1219"/>
        <end position="1221"/>
    </location>
</feature>
<feature type="strand" evidence="76">
    <location>
        <begin position="1223"/>
        <end position="1232"/>
    </location>
</feature>
<feature type="helix" evidence="76">
    <location>
        <begin position="1234"/>
        <end position="1248"/>
    </location>
</feature>
<feature type="strand" evidence="76">
    <location>
        <begin position="1249"/>
        <end position="1251"/>
    </location>
</feature>
<feature type="strand" evidence="76">
    <location>
        <begin position="1254"/>
        <end position="1257"/>
    </location>
</feature>
<feature type="helix" evidence="76">
    <location>
        <begin position="1258"/>
        <end position="1273"/>
    </location>
</feature>
<feature type="turn" evidence="76">
    <location>
        <begin position="1275"/>
        <end position="1280"/>
    </location>
</feature>
<feature type="helix" evidence="76">
    <location>
        <begin position="1282"/>
        <end position="1303"/>
    </location>
</feature>
<feature type="turn" evidence="78">
    <location>
        <begin position="1308"/>
        <end position="1310"/>
    </location>
</feature>
<feature type="helix" evidence="76">
    <location>
        <begin position="1314"/>
        <end position="1317"/>
    </location>
</feature>
<feature type="helix" evidence="76">
    <location>
        <begin position="1320"/>
        <end position="1322"/>
    </location>
</feature>
<feature type="strand" evidence="78">
    <location>
        <begin position="1331"/>
        <end position="1333"/>
    </location>
</feature>
<feature type="helix" evidence="76">
    <location>
        <begin position="1337"/>
        <end position="1339"/>
    </location>
</feature>
<feature type="strand" evidence="76">
    <location>
        <begin position="1340"/>
        <end position="1345"/>
    </location>
</feature>
<feature type="strand" evidence="76">
    <location>
        <begin position="1350"/>
        <end position="1356"/>
    </location>
</feature>
<feature type="strand" evidence="74">
    <location>
        <begin position="1360"/>
        <end position="1362"/>
    </location>
</feature>
<feature type="turn" evidence="76">
    <location>
        <begin position="1368"/>
        <end position="1371"/>
    </location>
</feature>
<feature type="helix" evidence="76">
    <location>
        <begin position="1375"/>
        <end position="1398"/>
    </location>
</feature>
<feature type="helix" evidence="76">
    <location>
        <begin position="1405"/>
        <end position="1410"/>
    </location>
</feature>
<feature type="turn" evidence="76">
    <location>
        <begin position="1411"/>
        <end position="1413"/>
    </location>
</feature>
<feature type="turn" evidence="76">
    <location>
        <begin position="1415"/>
        <end position="1418"/>
    </location>
</feature>
<feature type="helix" evidence="76">
    <location>
        <begin position="1419"/>
        <end position="1423"/>
    </location>
</feature>
<feature type="turn" evidence="85">
    <location>
        <begin position="1425"/>
        <end position="1429"/>
    </location>
</feature>
<feature type="helix" evidence="76">
    <location>
        <begin position="1430"/>
        <end position="1432"/>
    </location>
</feature>
<feature type="helix" evidence="76">
    <location>
        <begin position="1436"/>
        <end position="1441"/>
    </location>
</feature>
<feature type="turn" evidence="76">
    <location>
        <begin position="1442"/>
        <end position="1446"/>
    </location>
</feature>
<feature type="strand" evidence="78">
    <location>
        <begin position="1447"/>
        <end position="1449"/>
    </location>
</feature>
<feature type="turn" evidence="78">
    <location>
        <begin position="1452"/>
        <end position="1455"/>
    </location>
</feature>
<feature type="turn" evidence="76">
    <location>
        <begin position="1458"/>
        <end position="1460"/>
    </location>
</feature>
<feature type="helix" evidence="76">
    <location>
        <begin position="1469"/>
        <end position="1478"/>
    </location>
</feature>
<feature type="helix" evidence="76">
    <location>
        <begin position="1480"/>
        <end position="1485"/>
    </location>
</feature>
<feature type="turn" evidence="76">
    <location>
        <begin position="1486"/>
        <end position="1489"/>
    </location>
</feature>
<feature type="helix" evidence="76">
    <location>
        <begin position="1490"/>
        <end position="1493"/>
    </location>
</feature>
<feature type="helix" evidence="78">
    <location>
        <begin position="1498"/>
        <end position="1500"/>
    </location>
</feature>
<feature type="strand" evidence="76">
    <location>
        <begin position="1501"/>
        <end position="1503"/>
    </location>
</feature>
<feature type="strand" evidence="76">
    <location>
        <begin position="1507"/>
        <end position="1509"/>
    </location>
</feature>
<feature type="helix" evidence="76">
    <location>
        <begin position="1512"/>
        <end position="1515"/>
    </location>
</feature>
<feature type="helix" evidence="76">
    <location>
        <begin position="1520"/>
        <end position="1522"/>
    </location>
</feature>
<feature type="turn" evidence="76">
    <location>
        <begin position="1523"/>
        <end position="1527"/>
    </location>
</feature>
<feature type="helix" evidence="76">
    <location>
        <begin position="1529"/>
        <end position="1531"/>
    </location>
</feature>
<feature type="helix" evidence="76">
    <location>
        <begin position="1532"/>
        <end position="1537"/>
    </location>
</feature>
<feature type="helix" evidence="76">
    <location>
        <begin position="1539"/>
        <end position="1542"/>
    </location>
</feature>
<feature type="turn" evidence="76">
    <location>
        <begin position="1545"/>
        <end position="1547"/>
    </location>
</feature>
<feature type="strand" evidence="78">
    <location>
        <begin position="1550"/>
        <end position="1555"/>
    </location>
</feature>
<feature type="strand" evidence="74">
    <location>
        <begin position="1556"/>
        <end position="1558"/>
    </location>
</feature>
<feature type="strand" evidence="78">
    <location>
        <begin position="1561"/>
        <end position="1564"/>
    </location>
</feature>
<feature type="helix" evidence="76">
    <location>
        <begin position="1569"/>
        <end position="1576"/>
    </location>
</feature>
<feature type="turn" evidence="76">
    <location>
        <begin position="1578"/>
        <end position="1580"/>
    </location>
</feature>
<feature type="helix" evidence="76">
    <location>
        <begin position="1581"/>
        <end position="1597"/>
    </location>
</feature>
<feature type="helix" evidence="76">
    <location>
        <begin position="1601"/>
        <end position="1603"/>
    </location>
</feature>
<feature type="strand" evidence="78">
    <location>
        <begin position="1606"/>
        <end position="1611"/>
    </location>
</feature>
<feature type="turn" evidence="76">
    <location>
        <begin position="1617"/>
        <end position="1620"/>
    </location>
</feature>
<feature type="strand" evidence="76">
    <location>
        <begin position="1628"/>
        <end position="1631"/>
    </location>
</feature>
<feature type="strand" evidence="77">
    <location>
        <begin position="1632"/>
        <end position="1635"/>
    </location>
</feature>
<feature type="strand" evidence="81">
    <location>
        <begin position="1637"/>
        <end position="1639"/>
    </location>
</feature>
<feature type="strand" evidence="76">
    <location>
        <begin position="1642"/>
        <end position="1644"/>
    </location>
</feature>
<feature type="strand" evidence="81">
    <location>
        <begin position="1654"/>
        <end position="1658"/>
    </location>
</feature>
<feature type="strand" evidence="76">
    <location>
        <begin position="1660"/>
        <end position="1667"/>
    </location>
</feature>
<feature type="strand" evidence="76">
    <location>
        <begin position="1671"/>
        <end position="1673"/>
    </location>
</feature>
<feature type="helix" evidence="76">
    <location>
        <begin position="1676"/>
        <end position="1687"/>
    </location>
</feature>
<feature type="strand" evidence="76">
    <location>
        <begin position="1688"/>
        <end position="1693"/>
    </location>
</feature>
<feature type="strand" evidence="78">
    <location>
        <begin position="1696"/>
        <end position="1698"/>
    </location>
</feature>
<feature type="strand" evidence="76">
    <location>
        <begin position="1701"/>
        <end position="1706"/>
    </location>
</feature>
<feature type="turn" evidence="76">
    <location>
        <begin position="1707"/>
        <end position="1710"/>
    </location>
</feature>
<feature type="strand" evidence="76">
    <location>
        <begin position="1711"/>
        <end position="1717"/>
    </location>
</feature>
<feature type="turn" evidence="76">
    <location>
        <begin position="1720"/>
        <end position="1722"/>
    </location>
</feature>
<feature type="helix" evidence="76">
    <location>
        <begin position="1723"/>
        <end position="1733"/>
    </location>
</feature>
<feature type="turn" evidence="76">
    <location>
        <begin position="1734"/>
        <end position="1736"/>
    </location>
</feature>
<feature type="helix" evidence="76">
    <location>
        <begin position="1738"/>
        <end position="1751"/>
    </location>
</feature>
<feature type="strand" evidence="76">
    <location>
        <begin position="1753"/>
        <end position="1757"/>
    </location>
</feature>
<feature type="strand" evidence="71">
    <location>
        <begin position="1761"/>
        <end position="1763"/>
    </location>
</feature>
<feature type="turn" evidence="71">
    <location>
        <begin position="1765"/>
        <end position="1767"/>
    </location>
</feature>
<feature type="helix" evidence="71">
    <location>
        <begin position="1768"/>
        <end position="1772"/>
    </location>
</feature>
<feature type="strand" evidence="72">
    <location>
        <begin position="1773"/>
        <end position="1775"/>
    </location>
</feature>
<feature type="strand" evidence="72">
    <location>
        <begin position="1777"/>
        <end position="1781"/>
    </location>
</feature>
<feature type="strand" evidence="72">
    <location>
        <begin position="1785"/>
        <end position="1792"/>
    </location>
</feature>
<feature type="strand" evidence="71">
    <location>
        <begin position="1794"/>
        <end position="1796"/>
    </location>
</feature>
<feature type="strand" evidence="72">
    <location>
        <begin position="1798"/>
        <end position="1803"/>
    </location>
</feature>
<feature type="strand" evidence="72">
    <location>
        <begin position="1805"/>
        <end position="1810"/>
    </location>
</feature>
<feature type="turn" evidence="72">
    <location>
        <begin position="1812"/>
        <end position="1814"/>
    </location>
</feature>
<feature type="strand" evidence="72">
    <location>
        <begin position="1816"/>
        <end position="1822"/>
    </location>
</feature>
<feature type="helix" evidence="72">
    <location>
        <begin position="1824"/>
        <end position="1827"/>
    </location>
</feature>
<feature type="helix" evidence="72">
    <location>
        <begin position="1833"/>
        <end position="1851"/>
    </location>
</feature>
<feature type="helix" evidence="72">
    <location>
        <begin position="1854"/>
        <end position="1856"/>
    </location>
</feature>
<feature type="strand" evidence="72">
    <location>
        <begin position="1859"/>
        <end position="1865"/>
    </location>
</feature>
<feature type="helix" evidence="72">
    <location>
        <begin position="1866"/>
        <end position="1868"/>
    </location>
</feature>
<feature type="helix" evidence="72">
    <location>
        <begin position="1869"/>
        <end position="1875"/>
    </location>
</feature>
<feature type="turn" evidence="72">
    <location>
        <begin position="1876"/>
        <end position="1878"/>
    </location>
</feature>
<feature type="strand" evidence="72">
    <location>
        <begin position="1883"/>
        <end position="1886"/>
    </location>
</feature>
<feature type="helix" evidence="72">
    <location>
        <begin position="1893"/>
        <end position="1898"/>
    </location>
</feature>
<feature type="helix" evidence="72">
    <location>
        <begin position="1900"/>
        <end position="1908"/>
    </location>
</feature>
<feature type="strand" evidence="72">
    <location>
        <begin position="1913"/>
        <end position="1918"/>
    </location>
</feature>
<feature type="turn" evidence="72">
    <location>
        <begin position="1919"/>
        <end position="1922"/>
    </location>
</feature>
<feature type="helix" evidence="72">
    <location>
        <begin position="1923"/>
        <end position="1925"/>
    </location>
</feature>
<feature type="helix" evidence="72">
    <location>
        <begin position="1929"/>
        <end position="1945"/>
    </location>
</feature>
<feature type="helix" evidence="72">
    <location>
        <begin position="1947"/>
        <end position="1953"/>
    </location>
</feature>
<feature type="strand" evidence="78">
    <location>
        <begin position="1957"/>
        <end position="1959"/>
    </location>
</feature>
<feature type="strand" evidence="76">
    <location>
        <begin position="1966"/>
        <end position="1968"/>
    </location>
</feature>
<feature type="helix" evidence="72">
    <location>
        <begin position="1973"/>
        <end position="1989"/>
    </location>
</feature>
<feature type="strand" evidence="88">
    <location>
        <begin position="1995"/>
        <end position="1997"/>
    </location>
</feature>
<feature type="helix" evidence="71">
    <location>
        <begin position="1999"/>
        <end position="2001"/>
    </location>
</feature>
<feature type="helix" evidence="71">
    <location>
        <begin position="2004"/>
        <end position="2012"/>
    </location>
</feature>
<feature type="helix" evidence="87">
    <location>
        <begin position="2021"/>
        <end position="2026"/>
    </location>
</feature>
<feature type="strand" evidence="85">
    <location>
        <begin position="2040"/>
        <end position="2046"/>
    </location>
</feature>
<feature type="strand" evidence="85">
    <location>
        <begin position="2054"/>
        <end position="2058"/>
    </location>
</feature>
<feature type="helix" evidence="83">
    <location>
        <begin position="2072"/>
        <end position="2080"/>
    </location>
</feature>
<feature type="helix" evidence="83">
    <location>
        <begin position="2081"/>
        <end position="2088"/>
    </location>
</feature>
<feature type="strand" evidence="83">
    <location>
        <begin position="2089"/>
        <end position="2092"/>
    </location>
</feature>
<feature type="strand" evidence="80">
    <location>
        <begin position="2095"/>
        <end position="2097"/>
    </location>
</feature>
<feature type="strand" evidence="82">
    <location>
        <begin position="2099"/>
        <end position="2101"/>
    </location>
</feature>
<feature type="strand" evidence="83">
    <location>
        <begin position="2103"/>
        <end position="2107"/>
    </location>
</feature>
<feature type="helix" evidence="83">
    <location>
        <begin position="2108"/>
        <end position="2116"/>
    </location>
</feature>
<feature type="strand" evidence="83">
    <location>
        <begin position="2120"/>
        <end position="2122"/>
    </location>
</feature>
<feature type="strand" evidence="83">
    <location>
        <begin position="2125"/>
        <end position="2131"/>
    </location>
</feature>
<feature type="strand" evidence="83">
    <location>
        <begin position="2139"/>
        <end position="2146"/>
    </location>
</feature>
<feature type="strand" evidence="83">
    <location>
        <begin position="2149"/>
        <end position="2152"/>
    </location>
</feature>
<feature type="helix" evidence="83">
    <location>
        <begin position="2167"/>
        <end position="2169"/>
    </location>
</feature>
<feature type="strand" evidence="83">
    <location>
        <begin position="2172"/>
        <end position="2183"/>
    </location>
</feature>
<feature type="helix" evidence="83">
    <location>
        <begin position="2190"/>
        <end position="2202"/>
    </location>
</feature>
<feature type="turn" evidence="83">
    <location>
        <begin position="2208"/>
        <end position="2210"/>
    </location>
</feature>
<feature type="strand" evidence="83">
    <location>
        <begin position="2212"/>
        <end position="2217"/>
    </location>
</feature>
<feature type="strand" evidence="83">
    <location>
        <begin position="2222"/>
        <end position="2230"/>
    </location>
</feature>
<feature type="helix" evidence="83">
    <location>
        <begin position="2232"/>
        <end position="2239"/>
    </location>
</feature>
<feature type="strand" evidence="83">
    <location>
        <begin position="2245"/>
        <end position="2247"/>
    </location>
</feature>
<feature type="helix" evidence="83">
    <location>
        <begin position="2253"/>
        <end position="2255"/>
    </location>
</feature>
<feature type="strand" evidence="83">
    <location>
        <begin position="2256"/>
        <end position="2258"/>
    </location>
</feature>
<feature type="strand" evidence="83">
    <location>
        <begin position="2260"/>
        <end position="2267"/>
    </location>
</feature>
<feature type="strand" evidence="83">
    <location>
        <begin position="2270"/>
        <end position="2277"/>
    </location>
</feature>
<feature type="turn" evidence="84">
    <location>
        <begin position="2282"/>
        <end position="2284"/>
    </location>
</feature>
<feature type="helix" evidence="83">
    <location>
        <begin position="2285"/>
        <end position="2287"/>
    </location>
</feature>
<feature type="strand" evidence="83">
    <location>
        <begin position="2296"/>
        <end position="2298"/>
    </location>
</feature>
<feature type="helix" evidence="83">
    <location>
        <begin position="2307"/>
        <end position="2309"/>
    </location>
</feature>
<feature type="helix" evidence="83">
    <location>
        <begin position="2311"/>
        <end position="2316"/>
    </location>
</feature>
<feature type="helix" evidence="83">
    <location>
        <begin position="2317"/>
        <end position="2319"/>
    </location>
</feature>
<feature type="helix" evidence="79">
    <location>
        <begin position="2323"/>
        <end position="2326"/>
    </location>
</feature>
<comment type="function">
    <text evidence="4 10 16 23 24 26 27 28 29 30 31 32 44">Plays a role in pre-mRNA splicing as core component of precatalytic, catalytic and postcatalytic spliceosomal complexes, both of the predominant U2-type spliceosome and the minor U12-type spliceosome (PubMed:10411133, PubMed:11971955, PubMed:28076346, PubMed:28502770, PubMed:28781166, PubMed:29301961, PubMed:29360106, PubMed:29361316, PubMed:30315277, PubMed:30705154, PubMed:30728453). Functions as a scaffold that mediates the ordered assembly of spliceosomal proteins and snRNAs. Required for the assembly of the U4/U6-U5 tri-snRNP complex, a building block of the spliceosome. Functions as a scaffold that positions spliceosomal U2, U5 and U6 snRNAs at splice sites on pre-mRNA substrates, so that splicing can occur. Interacts with both the 5' and the 3' splice site.</text>
</comment>
<comment type="subunit">
    <text evidence="3 4 5 6 7 10 13 14 16 17 18 19 20 21 22 23 24 25 26 27 28 29 30 31 32 33 34 35 36 37 38 39 40">Part of the U5 snRNP complex (PubMed:2527369, PubMed:2532307). Component of the U4/U6-U5 tri-snRNP complex composed of the U4, U6 and U5 snRNAs and at least PRPF3, PRPF4, PRPF6, PRPF8, PRPF31, SNRNP200, TXNL4A, SNRNP40, DDX23, CD2BP2, PPIH, SNU13, EFTUD2, SART1 and USP39 (PubMed:16723661, PubMed:2479028, PubMed:26912367). Component of the U5.U4atac/U6atac snRNP complexes in U12-dependent spliceosomes (PubMed:11971955). Within the minor spliceosome, which acts on U12-type introns, interacts with PPIL2 and RBM48 (PubMed:33509932). Core component of U2-type precatalytic, catalytic and postcatalytic spliceosomal complexes (PubMed:10411133, PubMed:28076346, PubMed:28502770, PubMed:28781166, PubMed:29301961, PubMed:29360106, PubMed:29361316, PubMed:30315277, PubMed:30705154, PubMed:30728453). Found in a mRNA splicing-dependent exon junction complex (EJC) with SRRM1. Interacts with U5 snRNP proteins SNRP116 and SNRNP40. Interacts with EFTUD2. Interacts (via the MPN (JAB/Mov34) domain) with PRPF3 ('Lys-63'-linked polyubiquitinated); may stabilize the U4/U6-U5 tri-snRNP complex. Interacts (via RNase H homology domain) with AAR2 (PubMed:26527271). Interacts with RPAP3 and URI1 in a ZNHIT2-dependent manner (PubMed:28561026). Interacts with C9orf78 (PubMed:35167828, PubMed:35241646). Interacts with SNRNP200; the interaction is direct (PubMed:35188580, PubMed:35241646). Interacts with TSSC4; the interaction is direct (PubMed:35188580).</text>
</comment>
<comment type="interaction">
    <interactant intactId="EBI-538479">
        <id>Q6P2Q9</id>
    </interactant>
    <interactant intactId="EBI-930964">
        <id>P54253</id>
        <label>ATXN1</label>
    </interactant>
    <organismsDiffer>false</organismsDiffer>
    <experiments>6</experiments>
</comment>
<comment type="interaction">
    <interactant intactId="EBI-538479">
        <id>Q6P2Q9</id>
    </interactant>
    <interactant intactId="EBI-1050106">
        <id>O75934</id>
        <label>BCAS2</label>
    </interactant>
    <organismsDiffer>false</organismsDiffer>
    <experiments>3</experiments>
</comment>
<comment type="interaction">
    <interactant intactId="EBI-538479">
        <id>Q6P2Q9</id>
    </interactant>
    <interactant intactId="EBI-2557598">
        <id>O95905</id>
        <label>ECD</label>
    </interactant>
    <organismsDiffer>false</organismsDiffer>
    <experiments>6</experiments>
</comment>
<comment type="interaction">
    <interactant intactId="EBI-538479">
        <id>Q6P2Q9</id>
    </interactant>
    <interactant intactId="EBI-357897">
        <id>Q15029</id>
        <label>EFTUD2</label>
    </interactant>
    <organismsDiffer>false</organismsDiffer>
    <experiments>11</experiments>
</comment>
<comment type="interaction">
    <interactant intactId="EBI-538479">
        <id>Q6P2Q9</id>
    </interactant>
    <interactant intactId="EBI-746309">
        <id>Q92917</id>
        <label>GPKOW</label>
    </interactant>
    <organismsDiffer>false</organismsDiffer>
    <experiments>2</experiments>
</comment>
<comment type="interaction">
    <interactant intactId="EBI-538479">
        <id>Q6P2Q9</id>
    </interactant>
    <interactant intactId="EBI-1056125">
        <id>Q16778</id>
        <label>H2BC21</label>
    </interactant>
    <organismsDiffer>false</organismsDiffer>
    <experiments>2</experiments>
</comment>
<comment type="interaction">
    <interactant intactId="EBI-538479">
        <id>Q6P2Q9</id>
    </interactant>
    <interactant intactId="EBI-946095">
        <id>Q15365</id>
        <label>PCBP1</label>
    </interactant>
    <organismsDiffer>false</organismsDiffer>
    <experiments>2</experiments>
</comment>
<comment type="interaction">
    <interactant intactId="EBI-538479">
        <id>Q6P2Q9</id>
    </interactant>
    <interactant intactId="EBI-395746">
        <id>Q9UMS4</id>
        <label>PRPF19</label>
    </interactant>
    <organismsDiffer>false</organismsDiffer>
    <experiments>3</experiments>
</comment>
<comment type="interaction">
    <interactant intactId="EBI-538479">
        <id>Q6P2Q9</id>
    </interactant>
    <interactant intactId="EBI-536755">
        <id>O94906</id>
        <label>PRPF6</label>
    </interactant>
    <organismsDiffer>false</organismsDiffer>
    <experiments>5</experiments>
</comment>
<comment type="interaction">
    <interactant intactId="EBI-538479">
        <id>Q6P2Q9</id>
    </interactant>
    <interactant intactId="EBI-607761">
        <id>O43290</id>
        <label>SART1</label>
    </interactant>
    <organismsDiffer>false</organismsDiffer>
    <experiments>2</experiments>
</comment>
<comment type="interaction">
    <interactant intactId="EBI-538479">
        <id>Q6P2Q9</id>
    </interactant>
    <interactant intactId="EBI-2462271">
        <id>Q15428</id>
        <label>SF3A2</label>
    </interactant>
    <organismsDiffer>false</organismsDiffer>
    <experiments>2</experiments>
</comment>
<comment type="interaction">
    <interactant intactId="EBI-538479">
        <id>Q6P2Q9</id>
    </interactant>
    <interactant intactId="EBI-749111">
        <id>Q13435</id>
        <label>SF3B2</label>
    </interactant>
    <organismsDiffer>false</organismsDiffer>
    <experiments>3</experiments>
</comment>
<comment type="interaction">
    <interactant intactId="EBI-538479">
        <id>Q6P2Q9</id>
    </interactant>
    <interactant intactId="EBI-348469">
        <id>Q15427</id>
        <label>SF3B4</label>
    </interactant>
    <organismsDiffer>false</organismsDiffer>
    <experiments>2</experiments>
</comment>
<comment type="interaction">
    <interactant intactId="EBI-538479">
        <id>Q6P2Q9</id>
    </interactant>
    <interactant intactId="EBI-750559">
        <id>O95391</id>
        <label>SLU7</label>
    </interactant>
    <organismsDiffer>false</organismsDiffer>
    <experiments>2</experiments>
</comment>
<comment type="interaction">
    <interactant intactId="EBI-538479">
        <id>Q6P2Q9</id>
    </interactant>
    <interactant intactId="EBI-1045395">
        <id>O75643</id>
        <label>SNRNP200</label>
    </interactant>
    <organismsDiffer>false</organismsDiffer>
    <experiments>4</experiments>
</comment>
<comment type="interaction">
    <interactant intactId="EBI-538479">
        <id>Q6P2Q9</id>
    </interactant>
    <interactant intactId="EBI-5456052">
        <id>O75643-1</id>
        <label>SNRNP200</label>
    </interactant>
    <organismsDiffer>false</organismsDiffer>
    <experiments>2</experiments>
</comment>
<comment type="interaction">
    <interactant intactId="EBI-538479">
        <id>Q6P2Q9</id>
    </interactant>
    <interactant intactId="EBI-538492">
        <id>Q96DI7</id>
        <label>SNRNP40</label>
    </interactant>
    <organismsDiffer>false</organismsDiffer>
    <experiments>8</experiments>
</comment>
<comment type="interaction">
    <interactant intactId="EBI-538479">
        <id>Q6P2Q9</id>
    </interactant>
    <interactant intactId="EBI-372899">
        <id>Q13148</id>
        <label>TARDBP</label>
    </interactant>
    <organismsDiffer>false</organismsDiffer>
    <experiments>3</experiments>
</comment>
<comment type="interaction">
    <interactant intactId="EBI-538479">
        <id>Q6P2Q9</id>
    </interactant>
    <interactant intactId="EBI-7705033">
        <id>Q9BRX9</id>
        <label>WDR83</label>
    </interactant>
    <organismsDiffer>false</organismsDiffer>
    <experiments>2</experiments>
</comment>
<comment type="interaction">
    <interactant intactId="EBI-538479">
        <id>Q6P2Q9</id>
    </interactant>
    <interactant intactId="EBI-3920997">
        <id>Q96NB3</id>
        <label>ZNF830</label>
    </interactant>
    <organismsDiffer>false</organismsDiffer>
    <experiments>2</experiments>
</comment>
<comment type="subcellular location">
    <subcellularLocation>
        <location evidence="22 23 24 26 27 28 29 30 31 32">Nucleus</location>
    </subcellularLocation>
    <subcellularLocation>
        <location evidence="45">Nucleus speckle</location>
    </subcellularLocation>
</comment>
<comment type="tissue specificity">
    <text evidence="4">Widely expressed.</text>
</comment>
<comment type="domain">
    <text evidence="1 35">The MPN (JAB/Mov34) domain mediates interaction with TSSC4 and SNRNP200 (PubMed:35188580). Has structural similarity with deubiquitinating enzymes, but lacks the residues that would bind the catalytic metal ion.</text>
</comment>
<comment type="domain">
    <text evidence="1">Contains a region with structural similarity to reverse transcriptase, presenting the classical thumb, fingers and palm architecture, but lacks enzyme activity, since the essential metal-binding residues are not conserved.</text>
</comment>
<comment type="domain">
    <text evidence="1">Contains a region with structural similarity to type-2 restriction endonucleases, but the residues that would bind catalytic metal ions in endonucleases are instead involved in hydrogen bonds that stabilize the protein structure.</text>
</comment>
<comment type="domain">
    <text evidence="1">Contains a region with structural similarity to RNase H, but lacks RNase H activity.</text>
</comment>
<comment type="disease" evidence="8 9 11 14 43">
    <disease id="DI-00980">
        <name>Retinitis pigmentosa 13</name>
        <acronym>RP13</acronym>
        <description>A retinal dystrophy belonging to the group of pigmentary retinopathies. Retinitis pigmentosa is characterized by retinal pigment deposits visible on fundus examination and primary loss of rod photoreceptor cells followed by secondary loss of cone photoreceptors. Patients typically have night vision blindness and loss of midperipheral visual field. As their condition progresses, they lose their far peripheral visual field and eventually central vision as well.</description>
        <dbReference type="MIM" id="600059"/>
    </disease>
    <text>The disease is caused by variants affecting the gene represented in this entry.</text>
</comment>
<gene>
    <name type="primary">PRPF8</name>
    <name type="synonym">PRPC8</name>
</gene>
<evidence type="ECO:0000250" key="1"/>
<evidence type="ECO:0000255" key="2">
    <source>
        <dbReference type="PROSITE-ProRule" id="PRU01182"/>
    </source>
</evidence>
<evidence type="ECO:0000269" key="3">
    <source>
    </source>
</evidence>
<evidence type="ECO:0000269" key="4">
    <source>
    </source>
</evidence>
<evidence type="ECO:0000269" key="5">
    <source>
    </source>
</evidence>
<evidence type="ECO:0000269" key="6">
    <source>
    </source>
</evidence>
<evidence type="ECO:0000269" key="7">
    <source>
    </source>
</evidence>
<evidence type="ECO:0000269" key="8">
    <source>
    </source>
</evidence>
<evidence type="ECO:0000269" key="9">
    <source>
    </source>
</evidence>
<evidence type="ECO:0000269" key="10">
    <source>
    </source>
</evidence>
<evidence type="ECO:0000269" key="11">
    <source>
    </source>
</evidence>
<evidence type="ECO:0000269" key="12">
    <source>
    </source>
</evidence>
<evidence type="ECO:0000269" key="13">
    <source>
    </source>
</evidence>
<evidence type="ECO:0000269" key="14">
    <source>
    </source>
</evidence>
<evidence type="ECO:0000269" key="15">
    <source>
    </source>
</evidence>
<evidence type="ECO:0000269" key="16">
    <source>
    </source>
</evidence>
<evidence type="ECO:0000269" key="17">
    <source>
    </source>
</evidence>
<evidence type="ECO:0000269" key="18">
    <source>
    </source>
</evidence>
<evidence type="ECO:0000269" key="19">
    <source>
    </source>
</evidence>
<evidence type="ECO:0000269" key="20">
    <source>
    </source>
</evidence>
<evidence type="ECO:0000269" key="21">
    <source>
    </source>
</evidence>
<evidence type="ECO:0000269" key="22">
    <source>
    </source>
</evidence>
<evidence type="ECO:0000269" key="23">
    <source>
    </source>
</evidence>
<evidence type="ECO:0000269" key="24">
    <source>
    </source>
</evidence>
<evidence type="ECO:0000269" key="25">
    <source>
    </source>
</evidence>
<evidence type="ECO:0000269" key="26">
    <source>
    </source>
</evidence>
<evidence type="ECO:0000269" key="27">
    <source>
    </source>
</evidence>
<evidence type="ECO:0000269" key="28">
    <source>
    </source>
</evidence>
<evidence type="ECO:0000269" key="29">
    <source>
    </source>
</evidence>
<evidence type="ECO:0000269" key="30">
    <source>
    </source>
</evidence>
<evidence type="ECO:0000269" key="31">
    <source>
    </source>
</evidence>
<evidence type="ECO:0000269" key="32">
    <source>
    </source>
</evidence>
<evidence type="ECO:0000269" key="33">
    <source>
    </source>
</evidence>
<evidence type="ECO:0000269" key="34">
    <source>
    </source>
</evidence>
<evidence type="ECO:0000269" key="35">
    <source>
    </source>
</evidence>
<evidence type="ECO:0000269" key="36">
    <source>
    </source>
</evidence>
<evidence type="ECO:0000269" key="37">
    <source>
    </source>
</evidence>
<evidence type="ECO:0000269" key="38">
    <source>
    </source>
</evidence>
<evidence type="ECO:0000269" key="39">
    <source>
    </source>
</evidence>
<evidence type="ECO:0000269" key="40">
    <source>
    </source>
</evidence>
<evidence type="ECO:0000269" key="41">
    <source ref="2"/>
</evidence>
<evidence type="ECO:0000269" key="42">
    <source ref="4"/>
</evidence>
<evidence type="ECO:0000269" key="43">
    <source ref="52"/>
</evidence>
<evidence type="ECO:0000303" key="44">
    <source>
    </source>
</evidence>
<evidence type="ECO:0000305" key="45"/>
<evidence type="ECO:0007744" key="46">
    <source>
        <dbReference type="PDB" id="3JCR"/>
    </source>
</evidence>
<evidence type="ECO:0007744" key="47">
    <source>
        <dbReference type="PDB" id="5MQF"/>
    </source>
</evidence>
<evidence type="ECO:0007744" key="48">
    <source>
        <dbReference type="PDB" id="5O9Z"/>
    </source>
</evidence>
<evidence type="ECO:0007744" key="49">
    <source>
        <dbReference type="PDB" id="5XJC"/>
    </source>
</evidence>
<evidence type="ECO:0007744" key="50">
    <source>
        <dbReference type="PDB" id="5YZG"/>
    </source>
</evidence>
<evidence type="ECO:0007744" key="51">
    <source>
        <dbReference type="PDB" id="5Z56"/>
    </source>
</evidence>
<evidence type="ECO:0007744" key="52">
    <source>
        <dbReference type="PDB" id="5Z57"/>
    </source>
</evidence>
<evidence type="ECO:0007744" key="53">
    <source>
        <dbReference type="PDB" id="5Z58"/>
    </source>
</evidence>
<evidence type="ECO:0007744" key="54">
    <source>
        <dbReference type="PDB" id="6AH0"/>
    </source>
</evidence>
<evidence type="ECO:0007744" key="55">
    <source>
        <dbReference type="PDB" id="6AHD"/>
    </source>
</evidence>
<evidence type="ECO:0007744" key="56">
    <source>
        <dbReference type="PDB" id="6FF4"/>
    </source>
</evidence>
<evidence type="ECO:0007744" key="57">
    <source>
        <dbReference type="PDB" id="6FF7"/>
    </source>
</evidence>
<evidence type="ECO:0007744" key="58">
    <source>
        <dbReference type="PDB" id="6ICZ"/>
    </source>
</evidence>
<evidence type="ECO:0007744" key="59">
    <source>
        <dbReference type="PDB" id="6ID0"/>
    </source>
</evidence>
<evidence type="ECO:0007744" key="60">
    <source>
        <dbReference type="PDB" id="6ID1"/>
    </source>
</evidence>
<evidence type="ECO:0007744" key="61">
    <source>
        <dbReference type="PDB" id="6QDV"/>
    </source>
</evidence>
<evidence type="ECO:0007744" key="62">
    <source>
        <dbReference type="PDB" id="7DVQ"/>
    </source>
</evidence>
<evidence type="ECO:0007744" key="63">
    <source>
        <dbReference type="PDB" id="7OS2"/>
    </source>
</evidence>
<evidence type="ECO:0007744" key="64">
    <source>
        <dbReference type="PDB" id="7PX3"/>
    </source>
</evidence>
<evidence type="ECO:0007744" key="65">
    <source>
    </source>
</evidence>
<evidence type="ECO:0007744" key="66">
    <source>
    </source>
</evidence>
<evidence type="ECO:0007744" key="67">
    <source>
    </source>
</evidence>
<evidence type="ECO:0007744" key="68">
    <source>
    </source>
</evidence>
<evidence type="ECO:0007744" key="69">
    <source>
    </source>
</evidence>
<evidence type="ECO:0007744" key="70">
    <source>
    </source>
</evidence>
<evidence type="ECO:0007829" key="71">
    <source>
        <dbReference type="PDB" id="3E9L"/>
    </source>
</evidence>
<evidence type="ECO:0007829" key="72">
    <source>
        <dbReference type="PDB" id="4JK8"/>
    </source>
</evidence>
<evidence type="ECO:0007829" key="73">
    <source>
        <dbReference type="PDB" id="6FF4"/>
    </source>
</evidence>
<evidence type="ECO:0007829" key="74">
    <source>
        <dbReference type="PDB" id="6ICZ"/>
    </source>
</evidence>
<evidence type="ECO:0007829" key="75">
    <source>
        <dbReference type="PDB" id="6ID0"/>
    </source>
</evidence>
<evidence type="ECO:0007829" key="76">
    <source>
        <dbReference type="PDB" id="6ID1"/>
    </source>
</evidence>
<evidence type="ECO:0007829" key="77">
    <source>
        <dbReference type="PDB" id="6ZYM"/>
    </source>
</evidence>
<evidence type="ECO:0007829" key="78">
    <source>
        <dbReference type="PDB" id="7DVQ"/>
    </source>
</evidence>
<evidence type="ECO:0007829" key="79">
    <source>
        <dbReference type="PDB" id="7OS2"/>
    </source>
</evidence>
<evidence type="ECO:0007829" key="80">
    <source>
        <dbReference type="PDB" id="7PX3"/>
    </source>
</evidence>
<evidence type="ECO:0007829" key="81">
    <source>
        <dbReference type="PDB" id="7QTT"/>
    </source>
</evidence>
<evidence type="ECO:0007829" key="82">
    <source>
        <dbReference type="PDB" id="8BCA"/>
    </source>
</evidence>
<evidence type="ECO:0007829" key="83">
    <source>
        <dbReference type="PDB" id="8BCE"/>
    </source>
</evidence>
<evidence type="ECO:0007829" key="84">
    <source>
        <dbReference type="PDB" id="8BCG"/>
    </source>
</evidence>
<evidence type="ECO:0007829" key="85">
    <source>
        <dbReference type="PDB" id="8Q7N"/>
    </source>
</evidence>
<evidence type="ECO:0007829" key="86">
    <source>
        <dbReference type="PDB" id="8Q91"/>
    </source>
</evidence>
<evidence type="ECO:0007829" key="87">
    <source>
        <dbReference type="PDB" id="8QOZ"/>
    </source>
</evidence>
<evidence type="ECO:0007829" key="88">
    <source>
        <dbReference type="PDB" id="8RC0"/>
    </source>
</evidence>
<name>PRP8_HUMAN</name>
<sequence>MAGVFPYRGPGNPVPGPLAPLPDYMSEEKLQEKARKWQQLQAKRYAEKRKFGFVDAQKEDMPPEHVRKIIRDHGDMTNRKFRHDKRVYLGALKYMPHAVLKLLENMPMPWEQIRDVPVLYHITGAISFVNEIPWVIEPVYISQWGSMWIMMRREKRDRRHFKRMRFPPFDDEEPPLDYADNILDVEPLEAIQLELDPEEDAPVLDWFYDHQPLRDSRKYVNGSTYQRWQFTLPMMSTLYRLANQLLTDLVDDNYFYLFDLKAFFTSKALNMAIPGGPKFEPLVRDINLQDEDWNEFNDINKIIIRQPIRTEYKIAFPYLYNNLPHHVHLTWYHTPNVVFIKTEDPDLPAFYFDPLINPISHRHSVKSQEPLPDDDEEFELPEFVEPFLKDTPLYTDNTANGIALLWAPRPFNLRSGRTRRALDIPLVKNWYREHCPAGQPVKVRVSYQKLLKYYVLNALKHRPPKAQKKRYLFRSFKATKFFQSTKLDWVEVGLQVCRQGYNMLNLLIHRKNLNYLHLDYNFNLKPVKTLTTKERKKSRFGNAFHLCREVLRLTKLVVDSHVQYRLGNVDAFQLADGLQYIFAHVGQLTGMYRYKYKLMRQIRMCKDLKHLIYYRFNTGPVGKGPGCGFWAAGWRVWLFFMRGITPLLERWLGNLLARQFEGRHSKGVAKTVTKQRVESHFDLELRAAVMHDILDMMPEGIKQNKARTILQHLSEAWRCWKANIPWKVPGLPTPIENMILRYVKAKADWWTNTAHYNRERIRRGATVDKTVCKKNLGRLTRLYLKAEQERQHNYLKDGPYITAEEAVAVYTTTVHWLESRRFSPIPFPPLSYKHDTKLLILALERLKEAYSVKSRLNQSQREELGLIEQAYDNPHEALSRIKRHLLTQRAFKEVGIEFMDLYSHLVPVYDVEPLEKITDAYLDQYLWYEADKRRLFPPWIKPADTEPPPLLVYKWCQGINNLQDVWETSEGECNVMLESRFEKMYEKIDLTLLNRLLRLIVDHNIADYMTAKNNVVINYKDMNHTNSYGIIRGLQFASFIVQYYGLVMDLLVLGLHRASEMAGPPQMPNDFLSFQDIATEAAHPIRLFCRYIDRIHIFFRFTADEARDLIQRYLTEHPDPNNENIVGYNNKKCWPRDARMRLMKHDVNLGRAVFWDIKNRLPRSVTTVQWENSFVSVYSKDNPNLLFNMCGFECRILPKCRTSYEEFTHKDGVWNLQNEVTKERTAQCFLRVDDESMQRFHNRVRQILMASGSTTFTKIVNKWNTALIGLMTYFREAVVNTQELLDLLVKCENKIQTRIKIGLNSKMPSRFPPVVFYTPKELGGLGMLSMGHVLIPQSDLRWSKQTDVGITHFRSGMSHEEDQLIPNLYRYIQPWESEFIDSQRVWAEYALKRQEAIAQNRRLTLEDLEDSWDRGIPRINTLFQKDRHTLAYDKGWRVRTDFKQYQVLKQNPFWWTHQRHDGKLWNLNNYRTDMIQALGGVEGILEHTLFKGTYFPTWEGLFWEKASGFEESMKWKKLTNAQRSGLNQIPNRRFTLWWSPTINRANVYVGFQVQLDLTGIFMHGKIPTLKISLIQIFRAHLWQKIHESIVMDLCQVFDQELDALEIETVQKETIHPRKSYKMNSSCADILLFASYKWNVSRPSLLADSKDVMDSTTTQKYWIDIQLRWGDYDSHDIERYARAKFLDYTTDNMSIYPSPTGVLIAIDLAYNLHSAYGNWFPGSKPLIQQAMAKIMKANPALYVLRERIRKGLQLYSSEPTEPYLSSQNYGELFSNQIIWFVDDTNVYRVTIHKTFEGNLTTKPINGAIFIFNPRTGQLFLKIIHTSVWAGQKRLGQLAKWKTAEEVAALIRSLPVEEQPKQIIVTRKGMLDPLEVHLLDFPNIVIKGSELQLPFQACLKVEKFGDLILKATEPQMVLFNLYDDWLKTISSYTAFSRLILILRALHVNNDRAKVILKPDKTTITEPHHIWPTLTDEEWIKVEVQLKDLILADYGKKNNVNVASLTQSEIRDIILGMEISAPSQQRQQIAEIEKQTKEQSQLTATQTRTVNKHGDEIITSTTSNYETQTFSSKTEWRVRAISAANLHLRTNHIYVSSDDIKETGYTYILPKNVLKKFICISDLRAQIAGYLYGVSPPDNPQVKEIRCIVMVPQWGTHQTVHLPGQLPQHEYLKEMEPLGWIHTQPNESPQLSPQDVTTHAKIMADNPSWDGEKTIIITCSFTPGSCTLTAYKLTPSGYEWGRQNTDKGNNPKGYLPSHYERVQMLLSDRFLGFFMVPAQSSWNYNFMGVRHDPNMKYELQLANPKEFYHEVHRPSHFLNFALLQEGEVYSADREDLYA</sequence>
<dbReference type="EMBL" id="AF092565">
    <property type="protein sequence ID" value="AAC61776.1"/>
    <property type="molecule type" value="mRNA"/>
</dbReference>
<dbReference type="EMBL" id="AB007510">
    <property type="protein sequence ID" value="BAA22563.1"/>
    <property type="molecule type" value="mRNA"/>
</dbReference>
<dbReference type="EMBL" id="BC064370">
    <property type="protein sequence ID" value="AAH64370.1"/>
    <property type="molecule type" value="mRNA"/>
</dbReference>
<dbReference type="CCDS" id="CCDS11010.1"/>
<dbReference type="RefSeq" id="NP_006436.3">
    <property type="nucleotide sequence ID" value="NM_006445.3"/>
</dbReference>
<dbReference type="RefSeq" id="XP_024306305.1">
    <property type="nucleotide sequence ID" value="XM_024450537.2"/>
</dbReference>
<dbReference type="RefSeq" id="XP_054170697.1">
    <property type="nucleotide sequence ID" value="XM_054314722.1"/>
</dbReference>
<dbReference type="RefSeq" id="XP_054185172.1">
    <property type="nucleotide sequence ID" value="XM_054329197.1"/>
</dbReference>
<dbReference type="PDB" id="3E9L">
    <property type="method" value="X-ray"/>
    <property type="resolution" value="1.95 A"/>
    <property type="chains" value="A=1760-2016"/>
</dbReference>
<dbReference type="PDB" id="3ENB">
    <property type="method" value="X-ray"/>
    <property type="resolution" value="1.85 A"/>
    <property type="chains" value="A/B=1769-1990"/>
</dbReference>
<dbReference type="PDB" id="3JCR">
    <property type="method" value="EM"/>
    <property type="resolution" value="7.00 A"/>
    <property type="chains" value="A=1-2335"/>
</dbReference>
<dbReference type="PDB" id="3LRU">
    <property type="method" value="X-ray"/>
    <property type="resolution" value="1.85 A"/>
    <property type="chains" value="A/B=1831-1990"/>
</dbReference>
<dbReference type="PDB" id="4JK7">
    <property type="method" value="X-ray"/>
    <property type="resolution" value="1.40 A"/>
    <property type="chains" value="A/B=1769-1990"/>
</dbReference>
<dbReference type="PDB" id="4JK8">
    <property type="method" value="X-ray"/>
    <property type="resolution" value="1.15 A"/>
    <property type="chains" value="A/B=1769-1990"/>
</dbReference>
<dbReference type="PDB" id="4JK9">
    <property type="method" value="X-ray"/>
    <property type="resolution" value="1.50 A"/>
    <property type="chains" value="A/B=1769-1990"/>
</dbReference>
<dbReference type="PDB" id="4JKA">
    <property type="method" value="X-ray"/>
    <property type="resolution" value="1.32 A"/>
    <property type="chains" value="A/B=1769-1990"/>
</dbReference>
<dbReference type="PDB" id="4JKB">
    <property type="method" value="X-ray"/>
    <property type="resolution" value="1.30 A"/>
    <property type="chains" value="A/B=1769-1990"/>
</dbReference>
<dbReference type="PDB" id="4JKC">
    <property type="method" value="X-ray"/>
    <property type="resolution" value="1.50 A"/>
    <property type="chains" value="A/B=1769-1990"/>
</dbReference>
<dbReference type="PDB" id="4JKD">
    <property type="method" value="X-ray"/>
    <property type="resolution" value="1.55 A"/>
    <property type="chains" value="A/B=1769-1990"/>
</dbReference>
<dbReference type="PDB" id="4JKE">
    <property type="method" value="X-ray"/>
    <property type="resolution" value="1.65 A"/>
    <property type="chains" value="A/B=1769-1990"/>
</dbReference>
<dbReference type="PDB" id="4JKF">
    <property type="method" value="X-ray"/>
    <property type="resolution" value="1.95 A"/>
    <property type="chains" value="A/B=1769-1990"/>
</dbReference>
<dbReference type="PDB" id="4JKG">
    <property type="method" value="X-ray"/>
    <property type="resolution" value="1.80 A"/>
    <property type="chains" value="A/B=1769-1990"/>
</dbReference>
<dbReference type="PDB" id="4JKH">
    <property type="method" value="X-ray"/>
    <property type="resolution" value="1.80 A"/>
    <property type="chains" value="A/B=1769-1990"/>
</dbReference>
<dbReference type="PDB" id="4KIT">
    <property type="method" value="X-ray"/>
    <property type="resolution" value="3.60 A"/>
    <property type="chains" value="C=2064-2335"/>
</dbReference>
<dbReference type="PDB" id="5MQF">
    <property type="method" value="EM"/>
    <property type="resolution" value="5.90 A"/>
    <property type="chains" value="A=1-2335"/>
</dbReference>
<dbReference type="PDB" id="5O9Z">
    <property type="method" value="EM"/>
    <property type="resolution" value="4.50 A"/>
    <property type="chains" value="A=1-2335"/>
</dbReference>
<dbReference type="PDB" id="5XJC">
    <property type="method" value="EM"/>
    <property type="resolution" value="3.60 A"/>
    <property type="chains" value="A=1-2335"/>
</dbReference>
<dbReference type="PDB" id="5YZG">
    <property type="method" value="EM"/>
    <property type="resolution" value="4.10 A"/>
    <property type="chains" value="A=1-2335"/>
</dbReference>
<dbReference type="PDB" id="5Z56">
    <property type="method" value="EM"/>
    <property type="resolution" value="5.10 A"/>
    <property type="chains" value="A=1-2335"/>
</dbReference>
<dbReference type="PDB" id="5Z57">
    <property type="method" value="EM"/>
    <property type="resolution" value="6.50 A"/>
    <property type="chains" value="A=1-2335"/>
</dbReference>
<dbReference type="PDB" id="5Z58">
    <property type="method" value="EM"/>
    <property type="resolution" value="4.90 A"/>
    <property type="chains" value="A=1-2335"/>
</dbReference>
<dbReference type="PDB" id="6AH0">
    <property type="method" value="EM"/>
    <property type="resolution" value="5.70 A"/>
    <property type="chains" value="A=1-2335"/>
</dbReference>
<dbReference type="PDB" id="6AHD">
    <property type="method" value="EM"/>
    <property type="resolution" value="3.80 A"/>
    <property type="chains" value="A=1-2335"/>
</dbReference>
<dbReference type="PDB" id="6FF4">
    <property type="method" value="EM"/>
    <property type="resolution" value="16.00 A"/>
    <property type="chains" value="A=1-2335"/>
</dbReference>
<dbReference type="PDB" id="6FF7">
    <property type="method" value="EM"/>
    <property type="resolution" value="4.50 A"/>
    <property type="chains" value="A=1-2335"/>
</dbReference>
<dbReference type="PDB" id="6ICZ">
    <property type="method" value="EM"/>
    <property type="resolution" value="3.00 A"/>
    <property type="chains" value="A=1-2335"/>
</dbReference>
<dbReference type="PDB" id="6ID0">
    <property type="method" value="EM"/>
    <property type="resolution" value="2.90 A"/>
    <property type="chains" value="A=1-2335"/>
</dbReference>
<dbReference type="PDB" id="6ID1">
    <property type="method" value="EM"/>
    <property type="resolution" value="2.86 A"/>
    <property type="chains" value="A=1-2335"/>
</dbReference>
<dbReference type="PDB" id="6QDV">
    <property type="method" value="EM"/>
    <property type="resolution" value="3.30 A"/>
    <property type="chains" value="A=1-2335"/>
</dbReference>
<dbReference type="PDB" id="6QW6">
    <property type="method" value="EM"/>
    <property type="resolution" value="2.92 A"/>
    <property type="chains" value="5A=25-2335"/>
</dbReference>
<dbReference type="PDB" id="6QX9">
    <property type="method" value="EM"/>
    <property type="resolution" value="3.28 A"/>
    <property type="chains" value="5A=25-2335"/>
</dbReference>
<dbReference type="PDB" id="6S8Q">
    <property type="method" value="X-ray"/>
    <property type="resolution" value="2.39 A"/>
    <property type="chains" value="J=2064-2320"/>
</dbReference>
<dbReference type="PDB" id="6S9I">
    <property type="method" value="X-ray"/>
    <property type="resolution" value="2.60 A"/>
    <property type="chains" value="J=2064-2320"/>
</dbReference>
<dbReference type="PDB" id="6ZYM">
    <property type="method" value="EM"/>
    <property type="resolution" value="3.40 A"/>
    <property type="chains" value="A=1-1755"/>
</dbReference>
<dbReference type="PDB" id="7A5P">
    <property type="method" value="EM"/>
    <property type="resolution" value="5.00 A"/>
    <property type="chains" value="A=1-2335"/>
</dbReference>
<dbReference type="PDB" id="7AAV">
    <property type="method" value="EM"/>
    <property type="resolution" value="4.20 A"/>
    <property type="chains" value="A=1-2335"/>
</dbReference>
<dbReference type="PDB" id="7ABF">
    <property type="method" value="EM"/>
    <property type="resolution" value="3.90 A"/>
    <property type="chains" value="A=1-2335"/>
</dbReference>
<dbReference type="PDB" id="7ABG">
    <property type="method" value="EM"/>
    <property type="resolution" value="7.80 A"/>
    <property type="chains" value="A=1-2335"/>
</dbReference>
<dbReference type="PDB" id="7ABI">
    <property type="method" value="EM"/>
    <property type="resolution" value="8.00 A"/>
    <property type="chains" value="A=1-2335"/>
</dbReference>
<dbReference type="PDB" id="7BDI">
    <property type="method" value="X-ray"/>
    <property type="resolution" value="2.80 A"/>
    <property type="chains" value="J=2064-2320"/>
</dbReference>
<dbReference type="PDB" id="7BDJ">
    <property type="method" value="X-ray"/>
    <property type="resolution" value="2.59 A"/>
    <property type="chains" value="J=2064-2320"/>
</dbReference>
<dbReference type="PDB" id="7BDK">
    <property type="method" value="X-ray"/>
    <property type="resolution" value="2.52 A"/>
    <property type="chains" value="J=2064-2320"/>
</dbReference>
<dbReference type="PDB" id="7BDL">
    <property type="method" value="X-ray"/>
    <property type="resolution" value="2.69 A"/>
    <property type="chains" value="J=2064-2320"/>
</dbReference>
<dbReference type="PDB" id="7DVQ">
    <property type="method" value="EM"/>
    <property type="resolution" value="2.89 A"/>
    <property type="chains" value="A=1-2335"/>
</dbReference>
<dbReference type="PDB" id="7OS2">
    <property type="method" value="EM"/>
    <property type="resolution" value="2.76 A"/>
    <property type="chains" value="J=2064-2335"/>
</dbReference>
<dbReference type="PDB" id="7PJH">
    <property type="method" value="X-ray"/>
    <property type="resolution" value="2.35 A"/>
    <property type="chains" value="B=1758-2016"/>
</dbReference>
<dbReference type="PDB" id="7PX3">
    <property type="method" value="EM"/>
    <property type="resolution" value="3.05 A"/>
    <property type="chains" value="J=2064-2320"/>
</dbReference>
<dbReference type="PDB" id="7QTT">
    <property type="method" value="EM"/>
    <property type="resolution" value="3.10 A"/>
    <property type="chains" value="a=1-2335"/>
</dbReference>
<dbReference type="PDB" id="7W59">
    <property type="method" value="EM"/>
    <property type="resolution" value="3.60 A"/>
    <property type="chains" value="A=1-2335"/>
</dbReference>
<dbReference type="PDB" id="7W5A">
    <property type="method" value="EM"/>
    <property type="resolution" value="3.60 A"/>
    <property type="chains" value="A=1-2335"/>
</dbReference>
<dbReference type="PDB" id="7W5B">
    <property type="method" value="EM"/>
    <property type="resolution" value="4.30 A"/>
    <property type="chains" value="A=1-2335"/>
</dbReference>
<dbReference type="PDB" id="8BC8">
    <property type="method" value="X-ray"/>
    <property type="resolution" value="2.39 A"/>
    <property type="chains" value="J=2064-2320"/>
</dbReference>
<dbReference type="PDB" id="8BC9">
    <property type="method" value="X-ray"/>
    <property type="resolution" value="2.30 A"/>
    <property type="chains" value="J=2064-2320"/>
</dbReference>
<dbReference type="PDB" id="8BCA">
    <property type="method" value="X-ray"/>
    <property type="resolution" value="2.80 A"/>
    <property type="chains" value="J=2064-2320"/>
</dbReference>
<dbReference type="PDB" id="8BCB">
    <property type="method" value="X-ray"/>
    <property type="resolution" value="2.38 A"/>
    <property type="chains" value="J=2064-2320"/>
</dbReference>
<dbReference type="PDB" id="8BCC">
    <property type="method" value="X-ray"/>
    <property type="resolution" value="2.35 A"/>
    <property type="chains" value="J=2064-2320"/>
</dbReference>
<dbReference type="PDB" id="8BCD">
    <property type="method" value="X-ray"/>
    <property type="resolution" value="3.50 A"/>
    <property type="chains" value="J=2064-2320"/>
</dbReference>
<dbReference type="PDB" id="8BCE">
    <property type="method" value="X-ray"/>
    <property type="resolution" value="2.05 A"/>
    <property type="chains" value="J=2064-2320"/>
</dbReference>
<dbReference type="PDB" id="8BCF">
    <property type="method" value="X-ray"/>
    <property type="resolution" value="2.42 A"/>
    <property type="chains" value="J=2064-2320"/>
</dbReference>
<dbReference type="PDB" id="8BCG">
    <property type="method" value="X-ray"/>
    <property type="resolution" value="2.39 A"/>
    <property type="chains" value="J=2064-2320"/>
</dbReference>
<dbReference type="PDB" id="8C6J">
    <property type="method" value="EM"/>
    <property type="resolution" value="2.80 A"/>
    <property type="chains" value="A=1-2335"/>
</dbReference>
<dbReference type="PDB" id="8CH6">
    <property type="method" value="EM"/>
    <property type="resolution" value="5.90 A"/>
    <property type="chains" value="a=1-2335"/>
</dbReference>
<dbReference type="PDB" id="8H6E">
    <property type="method" value="EM"/>
    <property type="resolution" value="3.20 A"/>
    <property type="chains" value="5B=1-2335"/>
</dbReference>
<dbReference type="PDB" id="8H6J">
    <property type="method" value="EM"/>
    <property type="resolution" value="3.25 A"/>
    <property type="chains" value="5B=1-2335"/>
</dbReference>
<dbReference type="PDB" id="8H6K">
    <property type="method" value="EM"/>
    <property type="resolution" value="2.70 A"/>
    <property type="chains" value="5B=1-2335"/>
</dbReference>
<dbReference type="PDB" id="8H6L">
    <property type="method" value="EM"/>
    <property type="resolution" value="2.60 A"/>
    <property type="chains" value="5B=1-2335"/>
</dbReference>
<dbReference type="PDB" id="8I0P">
    <property type="method" value="EM"/>
    <property type="resolution" value="3.40 A"/>
    <property type="chains" value="A=1-2335"/>
</dbReference>
<dbReference type="PDB" id="8I0R">
    <property type="method" value="EM"/>
    <property type="resolution" value="3.00 A"/>
    <property type="chains" value="A=1-2335"/>
</dbReference>
<dbReference type="PDB" id="8I0S">
    <property type="method" value="EM"/>
    <property type="resolution" value="4.20 A"/>
    <property type="chains" value="A=1-2335"/>
</dbReference>
<dbReference type="PDB" id="8I0T">
    <property type="method" value="EM"/>
    <property type="resolution" value="3.00 A"/>
    <property type="chains" value="A=1-2335"/>
</dbReference>
<dbReference type="PDB" id="8I0U">
    <property type="method" value="EM"/>
    <property type="resolution" value="3.30 A"/>
    <property type="chains" value="A=1-2335"/>
</dbReference>
<dbReference type="PDB" id="8I0V">
    <property type="method" value="EM"/>
    <property type="resolution" value="3.00 A"/>
    <property type="chains" value="A=1-2335"/>
</dbReference>
<dbReference type="PDB" id="8I0W">
    <property type="method" value="EM"/>
    <property type="resolution" value="3.40 A"/>
    <property type="chains" value="A=1-2335"/>
</dbReference>
<dbReference type="PDB" id="8Q7N">
    <property type="method" value="EM"/>
    <property type="resolution" value="3.10 A"/>
    <property type="chains" value="A=1-2335"/>
</dbReference>
<dbReference type="PDB" id="8Q7Q">
    <property type="method" value="EM"/>
    <property type="resolution" value="3.20 A"/>
    <property type="chains" value="A=1-2335"/>
</dbReference>
<dbReference type="PDB" id="8Q7V">
    <property type="method" value="EM"/>
    <property type="resolution" value="3.80 A"/>
    <property type="chains" value="A=1-2335"/>
</dbReference>
<dbReference type="PDB" id="8Q7W">
    <property type="method" value="EM"/>
    <property type="resolution" value="3.90 A"/>
    <property type="chains" value="A=1-2335"/>
</dbReference>
<dbReference type="PDB" id="8Q7X">
    <property type="method" value="EM"/>
    <property type="resolution" value="4.60 A"/>
    <property type="chains" value="A=1-2335"/>
</dbReference>
<dbReference type="PDB" id="8Q91">
    <property type="method" value="EM"/>
    <property type="resolution" value="3.10 A"/>
    <property type="chains" value="A=1-2335"/>
</dbReference>
<dbReference type="PDB" id="8QO9">
    <property type="method" value="EM"/>
    <property type="resolution" value="5.29 A"/>
    <property type="chains" value="A=1-2335"/>
</dbReference>
<dbReference type="PDB" id="8QOZ">
    <property type="method" value="EM"/>
    <property type="resolution" value="3.10 A"/>
    <property type="chains" value="A=1-2335"/>
</dbReference>
<dbReference type="PDB" id="8QP8">
    <property type="method" value="EM"/>
    <property type="resolution" value="3.50 A"/>
    <property type="chains" value="A=1-2335"/>
</dbReference>
<dbReference type="PDB" id="8QP9">
    <property type="method" value="EM"/>
    <property type="resolution" value="4.10 A"/>
    <property type="chains" value="A=1-2335"/>
</dbReference>
<dbReference type="PDB" id="8QPA">
    <property type="method" value="EM"/>
    <property type="resolution" value="3.70 A"/>
    <property type="chains" value="A=1-2335"/>
</dbReference>
<dbReference type="PDB" id="8QPB">
    <property type="method" value="EM"/>
    <property type="resolution" value="3.70 A"/>
    <property type="chains" value="A=1-2335"/>
</dbReference>
<dbReference type="PDB" id="8QPE">
    <property type="method" value="EM"/>
    <property type="resolution" value="3.10 A"/>
    <property type="chains" value="A=1-2335"/>
</dbReference>
<dbReference type="PDB" id="8QPK">
    <property type="method" value="EM"/>
    <property type="resolution" value="4.20 A"/>
    <property type="chains" value="A=1-2335"/>
</dbReference>
<dbReference type="PDB" id="8QXD">
    <property type="method" value="EM"/>
    <property type="resolution" value="9.60 A"/>
    <property type="chains" value="A=1-2335"/>
</dbReference>
<dbReference type="PDB" id="8QZS">
    <property type="method" value="EM"/>
    <property type="resolution" value="4.10 A"/>
    <property type="chains" value="A=1-2335"/>
</dbReference>
<dbReference type="PDB" id="8R08">
    <property type="method" value="EM"/>
    <property type="resolution" value="6.10 A"/>
    <property type="chains" value="A=1-2335"/>
</dbReference>
<dbReference type="PDB" id="8R09">
    <property type="method" value="EM"/>
    <property type="resolution" value="4.30 A"/>
    <property type="chains" value="A=1-2335"/>
</dbReference>
<dbReference type="PDB" id="8R0A">
    <property type="method" value="EM"/>
    <property type="resolution" value="5.80 A"/>
    <property type="chains" value="A=1-2335"/>
</dbReference>
<dbReference type="PDB" id="8R0B">
    <property type="method" value="EM"/>
    <property type="resolution" value="4.40 A"/>
    <property type="chains" value="A=1-2335"/>
</dbReference>
<dbReference type="PDB" id="8RC0">
    <property type="method" value="EM"/>
    <property type="resolution" value="3.20 A"/>
    <property type="chains" value="A=1-2335"/>
</dbReference>
<dbReference type="PDB" id="8RM5">
    <property type="method" value="EM"/>
    <property type="resolution" value="6.90 A"/>
    <property type="chains" value="A=1-2335"/>
</dbReference>
<dbReference type="PDB" id="8RO2">
    <property type="method" value="EM"/>
    <property type="resolution" value="3.50 A"/>
    <property type="chains" value="A=1-2335"/>
</dbReference>
<dbReference type="PDB" id="8Y6O">
    <property type="method" value="EM"/>
    <property type="resolution" value="3.38 A"/>
    <property type="chains" value="C=1-2335"/>
</dbReference>
<dbReference type="PDB" id="9FMD">
    <property type="method" value="EM"/>
    <property type="resolution" value="3.30 A"/>
    <property type="chains" value="A=1-2335"/>
</dbReference>
<dbReference type="PDBsum" id="3E9L"/>
<dbReference type="PDBsum" id="3ENB"/>
<dbReference type="PDBsum" id="3JCR"/>
<dbReference type="PDBsum" id="3LRU"/>
<dbReference type="PDBsum" id="4JK7"/>
<dbReference type="PDBsum" id="4JK8"/>
<dbReference type="PDBsum" id="4JK9"/>
<dbReference type="PDBsum" id="4JKA"/>
<dbReference type="PDBsum" id="4JKB"/>
<dbReference type="PDBsum" id="4JKC"/>
<dbReference type="PDBsum" id="4JKD"/>
<dbReference type="PDBsum" id="4JKE"/>
<dbReference type="PDBsum" id="4JKF"/>
<dbReference type="PDBsum" id="4JKG"/>
<dbReference type="PDBsum" id="4JKH"/>
<dbReference type="PDBsum" id="4KIT"/>
<dbReference type="PDBsum" id="5MQF"/>
<dbReference type="PDBsum" id="5O9Z"/>
<dbReference type="PDBsum" id="5XJC"/>
<dbReference type="PDBsum" id="5YZG"/>
<dbReference type="PDBsum" id="5Z56"/>
<dbReference type="PDBsum" id="5Z57"/>
<dbReference type="PDBsum" id="5Z58"/>
<dbReference type="PDBsum" id="6AH0"/>
<dbReference type="PDBsum" id="6AHD"/>
<dbReference type="PDBsum" id="6FF4"/>
<dbReference type="PDBsum" id="6FF7"/>
<dbReference type="PDBsum" id="6ICZ"/>
<dbReference type="PDBsum" id="6ID0"/>
<dbReference type="PDBsum" id="6ID1"/>
<dbReference type="PDBsum" id="6QDV"/>
<dbReference type="PDBsum" id="6QW6"/>
<dbReference type="PDBsum" id="6QX9"/>
<dbReference type="PDBsum" id="6S8Q"/>
<dbReference type="PDBsum" id="6S9I"/>
<dbReference type="PDBsum" id="6ZYM"/>
<dbReference type="PDBsum" id="7A5P"/>
<dbReference type="PDBsum" id="7AAV"/>
<dbReference type="PDBsum" id="7ABF"/>
<dbReference type="PDBsum" id="7ABG"/>
<dbReference type="PDBsum" id="7ABI"/>
<dbReference type="PDBsum" id="7BDI"/>
<dbReference type="PDBsum" id="7BDJ"/>
<dbReference type="PDBsum" id="7BDK"/>
<dbReference type="PDBsum" id="7BDL"/>
<dbReference type="PDBsum" id="7DVQ"/>
<dbReference type="PDBsum" id="7OS2"/>
<dbReference type="PDBsum" id="7PJH"/>
<dbReference type="PDBsum" id="7PX3"/>
<dbReference type="PDBsum" id="7QTT"/>
<dbReference type="PDBsum" id="7W59"/>
<dbReference type="PDBsum" id="7W5A"/>
<dbReference type="PDBsum" id="7W5B"/>
<dbReference type="PDBsum" id="8BC8"/>
<dbReference type="PDBsum" id="8BC9"/>
<dbReference type="PDBsum" id="8BCA"/>
<dbReference type="PDBsum" id="8BCB"/>
<dbReference type="PDBsum" id="8BCC"/>
<dbReference type="PDBsum" id="8BCD"/>
<dbReference type="PDBsum" id="8BCE"/>
<dbReference type="PDBsum" id="8BCF"/>
<dbReference type="PDBsum" id="8BCG"/>
<dbReference type="PDBsum" id="8C6J"/>
<dbReference type="PDBsum" id="8CH6"/>
<dbReference type="PDBsum" id="8H6E"/>
<dbReference type="PDBsum" id="8H6J"/>
<dbReference type="PDBsum" id="8H6K"/>
<dbReference type="PDBsum" id="8H6L"/>
<dbReference type="PDBsum" id="8I0P"/>
<dbReference type="PDBsum" id="8I0R"/>
<dbReference type="PDBsum" id="8I0S"/>
<dbReference type="PDBsum" id="8I0T"/>
<dbReference type="PDBsum" id="8I0U"/>
<dbReference type="PDBsum" id="8I0V"/>
<dbReference type="PDBsum" id="8I0W"/>
<dbReference type="PDBsum" id="8Q7N"/>
<dbReference type="PDBsum" id="8Q7Q"/>
<dbReference type="PDBsum" id="8Q7V"/>
<dbReference type="PDBsum" id="8Q7W"/>
<dbReference type="PDBsum" id="8Q7X"/>
<dbReference type="PDBsum" id="8Q91"/>
<dbReference type="PDBsum" id="8QO9"/>
<dbReference type="PDBsum" id="8QOZ"/>
<dbReference type="PDBsum" id="8QP8"/>
<dbReference type="PDBsum" id="8QP9"/>
<dbReference type="PDBsum" id="8QPA"/>
<dbReference type="PDBsum" id="8QPB"/>
<dbReference type="PDBsum" id="8QPE"/>
<dbReference type="PDBsum" id="8QPK"/>
<dbReference type="PDBsum" id="8QXD"/>
<dbReference type="PDBsum" id="8QZS"/>
<dbReference type="PDBsum" id="8R08"/>
<dbReference type="PDBsum" id="8R09"/>
<dbReference type="PDBsum" id="8R0A"/>
<dbReference type="PDBsum" id="8R0B"/>
<dbReference type="PDBsum" id="8RC0"/>
<dbReference type="PDBsum" id="8RM5"/>
<dbReference type="PDBsum" id="8RO2"/>
<dbReference type="PDBsum" id="8Y6O"/>
<dbReference type="PDBsum" id="9FMD"/>
<dbReference type="EMDB" id="EMD-11569"/>
<dbReference type="EMDB" id="EMD-11693"/>
<dbReference type="EMDB" id="EMD-11694"/>
<dbReference type="EMDB" id="EMD-11695"/>
<dbReference type="EMDB" id="EMD-11697"/>
<dbReference type="EMDB" id="EMD-13046"/>
<dbReference type="EMDB" id="EMD-13690"/>
<dbReference type="EMDB" id="EMD-14146"/>
<dbReference type="EMDB" id="EMD-16452"/>
<dbReference type="EMDB" id="EMD-16658"/>
<dbReference type="EMDB" id="EMD-18225"/>
<dbReference type="EMDB" id="EMD-18229"/>
<dbReference type="EMDB" id="EMD-18234"/>
<dbReference type="EMDB" id="EMD-18235"/>
<dbReference type="EMDB" id="EMD-18237"/>
<dbReference type="EMDB" id="EMD-18267"/>
<dbReference type="EMDB" id="EMD-18529"/>
<dbReference type="EMDB" id="EMD-18542"/>
<dbReference type="EMDB" id="EMD-18544"/>
<dbReference type="EMDB" id="EMD-18545"/>
<dbReference type="EMDB" id="EMD-18546"/>
<dbReference type="EMDB" id="EMD-18547"/>
<dbReference type="EMDB" id="EMD-18548"/>
<dbReference type="EMDB" id="EMD-18555"/>
<dbReference type="EMDB" id="EMD-18718"/>
<dbReference type="EMDB" id="EMD-18781"/>
<dbReference type="EMDB" id="EMD-18786"/>
<dbReference type="EMDB" id="EMD-18787"/>
<dbReference type="EMDB" id="EMD-18788"/>
<dbReference type="EMDB" id="EMD-18789"/>
<dbReference type="EMDB" id="EMD-19041"/>
<dbReference type="EMDB" id="EMD-19349"/>
<dbReference type="EMDB" id="EMD-19399"/>
<dbReference type="EMDB" id="EMD-30875"/>
<dbReference type="EMDB" id="EMD-32317"/>
<dbReference type="EMDB" id="EMD-32319"/>
<dbReference type="EMDB" id="EMD-32321"/>
<dbReference type="EMDB" id="EMD-34500"/>
<dbReference type="EMDB" id="EMD-34505"/>
<dbReference type="EMDB" id="EMD-34507"/>
<dbReference type="EMDB" id="EMD-34508"/>
<dbReference type="EMDB" id="EMD-35105"/>
<dbReference type="EMDB" id="EMD-35107"/>
<dbReference type="EMDB" id="EMD-35108"/>
<dbReference type="EMDB" id="EMD-35109"/>
<dbReference type="EMDB" id="EMD-35110"/>
<dbReference type="EMDB" id="EMD-35111"/>
<dbReference type="EMDB" id="EMD-35113"/>
<dbReference type="EMDB" id="EMD-3545"/>
<dbReference type="EMDB" id="EMD-3766"/>
<dbReference type="EMDB" id="EMD-38993"/>
<dbReference type="EMDB" id="EMD-4255"/>
<dbReference type="EMDB" id="EMD-4525"/>
<dbReference type="EMDB" id="EMD-4658"/>
<dbReference type="EMDB" id="EMD-4665"/>
<dbReference type="EMDB" id="EMD-6721"/>
<dbReference type="EMDB" id="EMD-6864"/>
<dbReference type="EMDB" id="EMD-6889"/>
<dbReference type="EMDB" id="EMD-6890"/>
<dbReference type="EMDB" id="EMD-6891"/>
<dbReference type="EMDB" id="EMD-9621"/>
<dbReference type="EMDB" id="EMD-9624"/>
<dbReference type="EMDB" id="EMD-9645"/>
<dbReference type="EMDB" id="EMD-9646"/>
<dbReference type="EMDB" id="EMD-9647"/>
<dbReference type="SMR" id="Q6P2Q9"/>
<dbReference type="BioGRID" id="115842">
    <property type="interactions" value="796"/>
</dbReference>
<dbReference type="ComplexPortal" id="CPX-2391">
    <property type="entry name" value="U4/U6.U5 small nuclear ribonucleoprotein complex"/>
</dbReference>
<dbReference type="CORUM" id="Q6P2Q9"/>
<dbReference type="DIP" id="DIP-29614N"/>
<dbReference type="FunCoup" id="Q6P2Q9">
    <property type="interactions" value="3569"/>
</dbReference>
<dbReference type="IntAct" id="Q6P2Q9">
    <property type="interactions" value="176"/>
</dbReference>
<dbReference type="MINT" id="Q6P2Q9"/>
<dbReference type="STRING" id="9606.ENSP00000460348"/>
<dbReference type="CarbonylDB" id="Q6P2Q9"/>
<dbReference type="GlyGen" id="Q6P2Q9">
    <property type="glycosylation" value="1 site, 1 O-linked glycan (1 site)"/>
</dbReference>
<dbReference type="iPTMnet" id="Q6P2Q9"/>
<dbReference type="MetOSite" id="Q6P2Q9"/>
<dbReference type="PhosphoSitePlus" id="Q6P2Q9"/>
<dbReference type="SwissPalm" id="Q6P2Q9"/>
<dbReference type="BioMuta" id="PRPF8"/>
<dbReference type="DMDM" id="67460824"/>
<dbReference type="jPOST" id="Q6P2Q9"/>
<dbReference type="MassIVE" id="Q6P2Q9"/>
<dbReference type="PaxDb" id="9606-ENSP00000460348"/>
<dbReference type="PeptideAtlas" id="Q6P2Q9"/>
<dbReference type="ProteomicsDB" id="66917"/>
<dbReference type="Pumba" id="Q6P2Q9"/>
<dbReference type="Antibodypedia" id="4094">
    <property type="antibodies" value="168 antibodies from 32 providers"/>
</dbReference>
<dbReference type="DNASU" id="10594"/>
<dbReference type="Ensembl" id="ENST00000304992.11">
    <property type="protein sequence ID" value="ENSP00000304350.6"/>
    <property type="gene ID" value="ENSG00000174231.18"/>
</dbReference>
<dbReference type="Ensembl" id="ENST00000572621.5">
    <property type="protein sequence ID" value="ENSP00000460348.1"/>
    <property type="gene ID" value="ENSG00000174231.18"/>
</dbReference>
<dbReference type="Ensembl" id="ENST00000614672.2">
    <property type="protein sequence ID" value="ENSP00000479194.1"/>
    <property type="gene ID" value="ENSG00000274442.2"/>
</dbReference>
<dbReference type="Ensembl" id="ENST00000634039.1">
    <property type="protein sequence ID" value="ENSP00000488611.1"/>
    <property type="gene ID" value="ENSG00000274442.2"/>
</dbReference>
<dbReference type="GeneID" id="10594"/>
<dbReference type="KEGG" id="hsa:10594"/>
<dbReference type="MANE-Select" id="ENST00000304992.11">
    <property type="protein sequence ID" value="ENSP00000304350.6"/>
    <property type="RefSeq nucleotide sequence ID" value="NM_006445.4"/>
    <property type="RefSeq protein sequence ID" value="NP_006436.3"/>
</dbReference>
<dbReference type="UCSC" id="uc002fte.3">
    <property type="organism name" value="human"/>
</dbReference>
<dbReference type="AGR" id="HGNC:17340"/>
<dbReference type="CTD" id="10594"/>
<dbReference type="DisGeNET" id="10594"/>
<dbReference type="GeneCards" id="PRPF8"/>
<dbReference type="GeneReviews" id="PRPF8"/>
<dbReference type="HGNC" id="HGNC:17340">
    <property type="gene designation" value="PRPF8"/>
</dbReference>
<dbReference type="HPA" id="ENSG00000174231">
    <property type="expression patterns" value="Low tissue specificity"/>
</dbReference>
<dbReference type="MalaCards" id="PRPF8"/>
<dbReference type="MIM" id="600059">
    <property type="type" value="phenotype"/>
</dbReference>
<dbReference type="MIM" id="607300">
    <property type="type" value="gene"/>
</dbReference>
<dbReference type="neXtProt" id="NX_Q6P2Q9"/>
<dbReference type="OpenTargets" id="ENSG00000174231"/>
<dbReference type="Orphanet" id="528084">
    <property type="disease" value="Non-specific syndromic intellectual disability"/>
</dbReference>
<dbReference type="Orphanet" id="791">
    <property type="disease" value="Retinitis pigmentosa"/>
</dbReference>
<dbReference type="PharmGKB" id="PA33815"/>
<dbReference type="VEuPathDB" id="HostDB:ENSG00000174231"/>
<dbReference type="eggNOG" id="KOG1795">
    <property type="taxonomic scope" value="Eukaryota"/>
</dbReference>
<dbReference type="GeneTree" id="ENSGT00390000015210"/>
<dbReference type="HOGENOM" id="CLU_000380_3_0_1"/>
<dbReference type="InParanoid" id="Q6P2Q9"/>
<dbReference type="OMA" id="ANKWNTS"/>
<dbReference type="OrthoDB" id="1931567at2759"/>
<dbReference type="PAN-GO" id="Q6P2Q9">
    <property type="GO annotations" value="8 GO annotations based on evolutionary models"/>
</dbReference>
<dbReference type="PhylomeDB" id="Q6P2Q9"/>
<dbReference type="TreeFam" id="TF105613"/>
<dbReference type="PathwayCommons" id="Q6P2Q9"/>
<dbReference type="Reactome" id="R-HSA-72163">
    <property type="pathway name" value="mRNA Splicing - Major Pathway"/>
</dbReference>
<dbReference type="Reactome" id="R-HSA-72165">
    <property type="pathway name" value="mRNA Splicing - Minor Pathway"/>
</dbReference>
<dbReference type="SignaLink" id="Q6P2Q9"/>
<dbReference type="SIGNOR" id="Q6P2Q9"/>
<dbReference type="BioGRID-ORCS" id="10594">
    <property type="hits" value="833 hits in 1166 CRISPR screens"/>
</dbReference>
<dbReference type="CD-CODE" id="804901D1">
    <property type="entry name" value="Nuclear speckle"/>
</dbReference>
<dbReference type="CD-CODE" id="91857CE7">
    <property type="entry name" value="Nucleolus"/>
</dbReference>
<dbReference type="ChiTaRS" id="PRPF8">
    <property type="organism name" value="human"/>
</dbReference>
<dbReference type="EvolutionaryTrace" id="Q6P2Q9"/>
<dbReference type="GeneWiki" id="PRPF8"/>
<dbReference type="GenomeRNAi" id="10594"/>
<dbReference type="Pharos" id="Q6P2Q9">
    <property type="development level" value="Tbio"/>
</dbReference>
<dbReference type="PRO" id="PR:Q6P2Q9"/>
<dbReference type="Proteomes" id="UP000005640">
    <property type="component" value="Chromosome 17"/>
</dbReference>
<dbReference type="RNAct" id="Q6P2Q9">
    <property type="molecule type" value="protein"/>
</dbReference>
<dbReference type="Bgee" id="ENSG00000174231">
    <property type="expression patterns" value="Expressed in adenohypophysis and 94 other cell types or tissues"/>
</dbReference>
<dbReference type="ExpressionAtlas" id="Q6P2Q9">
    <property type="expression patterns" value="baseline and differential"/>
</dbReference>
<dbReference type="GO" id="GO:0071013">
    <property type="term" value="C:catalytic step 2 spliceosome"/>
    <property type="evidence" value="ECO:0000314"/>
    <property type="project" value="UniProtKB"/>
</dbReference>
<dbReference type="GO" id="GO:0016020">
    <property type="term" value="C:membrane"/>
    <property type="evidence" value="ECO:0007005"/>
    <property type="project" value="UniProtKB"/>
</dbReference>
<dbReference type="GO" id="GO:0016607">
    <property type="term" value="C:nuclear speck"/>
    <property type="evidence" value="ECO:0000314"/>
    <property type="project" value="HPA"/>
</dbReference>
<dbReference type="GO" id="GO:0005654">
    <property type="term" value="C:nucleoplasm"/>
    <property type="evidence" value="ECO:0000304"/>
    <property type="project" value="Reactome"/>
</dbReference>
<dbReference type="GO" id="GO:0005634">
    <property type="term" value="C:nucleus"/>
    <property type="evidence" value="ECO:0000314"/>
    <property type="project" value="UniProtKB"/>
</dbReference>
<dbReference type="GO" id="GO:0071006">
    <property type="term" value="C:U2-type catalytic step 1 spliceosome"/>
    <property type="evidence" value="ECO:0000314"/>
    <property type="project" value="UniProtKB"/>
</dbReference>
<dbReference type="GO" id="GO:0071007">
    <property type="term" value="C:U2-type catalytic step 2 spliceosome"/>
    <property type="evidence" value="ECO:0000314"/>
    <property type="project" value="UniProtKB"/>
</dbReference>
<dbReference type="GO" id="GO:0071005">
    <property type="term" value="C:U2-type precatalytic spliceosome"/>
    <property type="evidence" value="ECO:0000314"/>
    <property type="project" value="UniProtKB"/>
</dbReference>
<dbReference type="GO" id="GO:0046540">
    <property type="term" value="C:U4/U6 x U5 tri-snRNP complex"/>
    <property type="evidence" value="ECO:0000314"/>
    <property type="project" value="CAFA"/>
</dbReference>
<dbReference type="GO" id="GO:0005682">
    <property type="term" value="C:U5 snRNP"/>
    <property type="evidence" value="ECO:0000318"/>
    <property type="project" value="GO_Central"/>
</dbReference>
<dbReference type="GO" id="GO:0070530">
    <property type="term" value="F:K63-linked polyubiquitin modification-dependent protein binding"/>
    <property type="evidence" value="ECO:0000314"/>
    <property type="project" value="UniProtKB"/>
</dbReference>
<dbReference type="GO" id="GO:0097157">
    <property type="term" value="F:pre-mRNA intronic binding"/>
    <property type="evidence" value="ECO:0000318"/>
    <property type="project" value="GO_Central"/>
</dbReference>
<dbReference type="GO" id="GO:0003723">
    <property type="term" value="F:RNA binding"/>
    <property type="evidence" value="ECO:0007005"/>
    <property type="project" value="UniProtKB"/>
</dbReference>
<dbReference type="GO" id="GO:0030619">
    <property type="term" value="F:U1 snRNA binding"/>
    <property type="evidence" value="ECO:0000318"/>
    <property type="project" value="GO_Central"/>
</dbReference>
<dbReference type="GO" id="GO:0030620">
    <property type="term" value="F:U2 snRNA binding"/>
    <property type="evidence" value="ECO:0000318"/>
    <property type="project" value="GO_Central"/>
</dbReference>
<dbReference type="GO" id="GO:0030623">
    <property type="term" value="F:U5 snRNA binding"/>
    <property type="evidence" value="ECO:0000318"/>
    <property type="project" value="GO_Central"/>
</dbReference>
<dbReference type="GO" id="GO:0017070">
    <property type="term" value="F:U6 snRNA binding"/>
    <property type="evidence" value="ECO:0000318"/>
    <property type="project" value="GO_Central"/>
</dbReference>
<dbReference type="GO" id="GO:0071222">
    <property type="term" value="P:cellular response to lipopolysaccharide"/>
    <property type="evidence" value="ECO:0007669"/>
    <property type="project" value="Ensembl"/>
</dbReference>
<dbReference type="GO" id="GO:0071356">
    <property type="term" value="P:cellular response to tumor necrosis factor"/>
    <property type="evidence" value="ECO:0007669"/>
    <property type="project" value="Ensembl"/>
</dbReference>
<dbReference type="GO" id="GO:0006397">
    <property type="term" value="P:mRNA processing"/>
    <property type="evidence" value="ECO:0000304"/>
    <property type="project" value="ProtInc"/>
</dbReference>
<dbReference type="GO" id="GO:0000398">
    <property type="term" value="P:mRNA splicing, via spliceosome"/>
    <property type="evidence" value="ECO:0000314"/>
    <property type="project" value="UniProtKB"/>
</dbReference>
<dbReference type="GO" id="GO:0008380">
    <property type="term" value="P:RNA splicing"/>
    <property type="evidence" value="ECO:0000304"/>
    <property type="project" value="UniProtKB"/>
</dbReference>
<dbReference type="GO" id="GO:0000375">
    <property type="term" value="P:RNA splicing, via transesterification reactions"/>
    <property type="evidence" value="ECO:0000304"/>
    <property type="project" value="UniProtKB"/>
</dbReference>
<dbReference type="GO" id="GO:0000244">
    <property type="term" value="P:spliceosomal tri-snRNP complex assembly"/>
    <property type="evidence" value="ECO:0000314"/>
    <property type="project" value="UniProtKB"/>
</dbReference>
<dbReference type="CDD" id="cd08056">
    <property type="entry name" value="MPN_PRP8"/>
    <property type="match status" value="1"/>
</dbReference>
<dbReference type="CDD" id="cd13838">
    <property type="entry name" value="RNase_H_like_Prp8_IV"/>
    <property type="match status" value="1"/>
</dbReference>
<dbReference type="FunFam" id="1.20.80.40:FF:000001">
    <property type="entry name" value="Pre-mRNA-processing-splicing factor 8"/>
    <property type="match status" value="1"/>
</dbReference>
<dbReference type="FunFam" id="3.30.420.230:FF:000003">
    <property type="entry name" value="Pre-mRNA-processing-splicing factor 8"/>
    <property type="match status" value="1"/>
</dbReference>
<dbReference type="FunFam" id="3.30.43.40:FF:000001">
    <property type="entry name" value="Pre-mRNA-processing-splicing factor 8"/>
    <property type="match status" value="1"/>
</dbReference>
<dbReference type="FunFam" id="3.40.140.10:FF:000002">
    <property type="entry name" value="Pre-mRNA-processing-splicing factor 8"/>
    <property type="match status" value="1"/>
</dbReference>
<dbReference type="FunFam" id="3.90.1570.40:FF:000001">
    <property type="entry name" value="Pre-mRNA-processing-splicing factor 8"/>
    <property type="match status" value="1"/>
</dbReference>
<dbReference type="Gene3D" id="1.20.80.40">
    <property type="match status" value="1"/>
</dbReference>
<dbReference type="Gene3D" id="3.30.420.230">
    <property type="match status" value="1"/>
</dbReference>
<dbReference type="Gene3D" id="3.90.1570.40">
    <property type="match status" value="1"/>
</dbReference>
<dbReference type="Gene3D" id="3.40.140.10">
    <property type="entry name" value="Cytidine Deaminase, domain 2"/>
    <property type="match status" value="1"/>
</dbReference>
<dbReference type="Gene3D" id="3.30.43.40">
    <property type="entry name" value="Pre-mRNA-processing-splicing factor 8, U5-snRNA-binding domain"/>
    <property type="match status" value="1"/>
</dbReference>
<dbReference type="InterPro" id="IPR000555">
    <property type="entry name" value="JAMM/MPN+_dom"/>
</dbReference>
<dbReference type="InterPro" id="IPR037518">
    <property type="entry name" value="MPN"/>
</dbReference>
<dbReference type="InterPro" id="IPR012591">
    <property type="entry name" value="PRO8NT"/>
</dbReference>
<dbReference type="InterPro" id="IPR012592">
    <property type="entry name" value="PROCN"/>
</dbReference>
<dbReference type="InterPro" id="IPR012984">
    <property type="entry name" value="PROCT"/>
</dbReference>
<dbReference type="InterPro" id="IPR027652">
    <property type="entry name" value="PRP8"/>
</dbReference>
<dbReference type="InterPro" id="IPR021983">
    <property type="entry name" value="PRP8_domainIV"/>
</dbReference>
<dbReference type="InterPro" id="IPR043173">
    <property type="entry name" value="Prp8_domainIV_fingers"/>
</dbReference>
<dbReference type="InterPro" id="IPR043172">
    <property type="entry name" value="Prp8_domainIV_palm"/>
</dbReference>
<dbReference type="InterPro" id="IPR019581">
    <property type="entry name" value="Prp8_U5-snRNA-bd"/>
</dbReference>
<dbReference type="InterPro" id="IPR042516">
    <property type="entry name" value="Prp8_U5-snRNA-bd_sf"/>
</dbReference>
<dbReference type="InterPro" id="IPR019580">
    <property type="entry name" value="Prp8_U6-snRNA-bd"/>
</dbReference>
<dbReference type="InterPro" id="IPR012337">
    <property type="entry name" value="RNaseH-like_sf"/>
</dbReference>
<dbReference type="InterPro" id="IPR019582">
    <property type="entry name" value="RRM_spliceosomal_PrP8"/>
</dbReference>
<dbReference type="PANTHER" id="PTHR11140">
    <property type="entry name" value="PRE-MRNA SPLICING FACTOR PRP8"/>
    <property type="match status" value="1"/>
</dbReference>
<dbReference type="PANTHER" id="PTHR11140:SF0">
    <property type="entry name" value="PRE-MRNA-PROCESSING-SPLICING FACTOR 8"/>
    <property type="match status" value="1"/>
</dbReference>
<dbReference type="Pfam" id="PF01398">
    <property type="entry name" value="JAB"/>
    <property type="match status" value="1"/>
</dbReference>
<dbReference type="Pfam" id="PF08082">
    <property type="entry name" value="PRO8NT"/>
    <property type="match status" value="1"/>
</dbReference>
<dbReference type="Pfam" id="PF08083">
    <property type="entry name" value="PROCN"/>
    <property type="match status" value="1"/>
</dbReference>
<dbReference type="Pfam" id="PF08084">
    <property type="entry name" value="PROCT"/>
    <property type="match status" value="1"/>
</dbReference>
<dbReference type="Pfam" id="PF12134">
    <property type="entry name" value="PRP8_domainIV"/>
    <property type="match status" value="1"/>
</dbReference>
<dbReference type="Pfam" id="PF10598">
    <property type="entry name" value="RRM_4"/>
    <property type="match status" value="1"/>
</dbReference>
<dbReference type="Pfam" id="PF10597">
    <property type="entry name" value="U5_2-snRNA_bdg"/>
    <property type="match status" value="1"/>
</dbReference>
<dbReference type="Pfam" id="PF10596">
    <property type="entry name" value="U6-snRNA_bdg"/>
    <property type="match status" value="1"/>
</dbReference>
<dbReference type="SMART" id="SM00232">
    <property type="entry name" value="JAB_MPN"/>
    <property type="match status" value="1"/>
</dbReference>
<dbReference type="SUPFAM" id="SSF53098">
    <property type="entry name" value="Ribonuclease H-like"/>
    <property type="match status" value="2"/>
</dbReference>
<dbReference type="PROSITE" id="PS50249">
    <property type="entry name" value="MPN"/>
    <property type="match status" value="1"/>
</dbReference>
<keyword id="KW-0002">3D-structure</keyword>
<keyword id="KW-0007">Acetylation</keyword>
<keyword id="KW-0903">Direct protein sequencing</keyword>
<keyword id="KW-0225">Disease variant</keyword>
<keyword id="KW-0488">Methylation</keyword>
<keyword id="KW-0507">mRNA processing</keyword>
<keyword id="KW-0508">mRNA splicing</keyword>
<keyword id="KW-0539">Nucleus</keyword>
<keyword id="KW-0597">Phosphoprotein</keyword>
<keyword id="KW-1267">Proteomics identification</keyword>
<keyword id="KW-1185">Reference proteome</keyword>
<keyword id="KW-0682">Retinitis pigmentosa</keyword>
<keyword id="KW-0687">Ribonucleoprotein</keyword>
<keyword id="KW-0694">RNA-binding</keyword>
<keyword id="KW-0747">Spliceosome</keyword>
<protein>
    <recommendedName>
        <fullName>Pre-mRNA-processing-splicing factor 8</fullName>
    </recommendedName>
    <alternativeName>
        <fullName>220 kDa U5 snRNP-specific protein</fullName>
    </alternativeName>
    <alternativeName>
        <fullName>PRP8 homolog</fullName>
    </alternativeName>
    <alternativeName>
        <fullName>Splicing factor Prp8</fullName>
    </alternativeName>
    <alternativeName>
        <fullName>p220</fullName>
    </alternativeName>
</protein>
<reference key="1">
    <citation type="journal article" date="1999" name="RNA">
        <title>The human Prp8 protein is a component of both U2- and U12-dependent spliceosomes.</title>
        <authorList>
            <person name="Luo H.R."/>
            <person name="Moreau G.A."/>
            <person name="Levin N."/>
            <person name="Moore M.J."/>
        </authorList>
    </citation>
    <scope>NUCLEOTIDE SEQUENCE [MRNA]</scope>
    <scope>TISSUE SPECIFICITY</scope>
    <scope>FUNCTION</scope>
    <scope>SUBUNIT</scope>
    <scope>IDENTIFICATION IN U2- AND U12-DEPENDENT SPLICEOSOME COMPLEXES</scope>
</reference>
<reference key="2">
    <citation type="submission" date="1997-09" db="EMBL/GenBank/DDBJ databases">
        <title>Human homologue of Saccharomyces cerevisiae PRP8, pre-mRNA splicing factor.</title>
        <authorList>
            <person name="Shimada Y."/>
            <person name="Fujiwara T."/>
            <person name="Kawai A."/>
            <person name="Shimizu F."/>
            <person name="Okuno S."/>
            <person name="Ozaki K."/>
            <person name="Takeda S."/>
            <person name="Watanabe T."/>
            <person name="Nagata M."/>
            <person name="Takahashi E."/>
        </authorList>
    </citation>
    <scope>NUCLEOTIDE SEQUENCE [MRNA]</scope>
    <scope>VARIANTS GLU-68; LEU-874 AND HIS-1293</scope>
</reference>
<reference key="3">
    <citation type="journal article" date="2004" name="Genome Res.">
        <title>The status, quality, and expansion of the NIH full-length cDNA project: the Mammalian Gene Collection (MGC).</title>
        <authorList>
            <consortium name="The MGC Project Team"/>
        </authorList>
    </citation>
    <scope>NUCLEOTIDE SEQUENCE [LARGE SCALE MRNA]</scope>
    <scope>VARIANT HIS-227</scope>
    <source>
        <tissue>Testis</tissue>
    </source>
</reference>
<reference key="4">
    <citation type="submission" date="2008-12" db="UniProtKB">
        <authorList>
            <person name="Bienvenut W.V."/>
            <person name="Lilla S."/>
            <person name="von Kriegsheim A."/>
            <person name="Lempens A."/>
            <person name="Kolch W."/>
        </authorList>
    </citation>
    <scope>PROTEIN SEQUENCE OF 2-8; 51-58; 218-227; 268-278; 421-428; 453-460; 556-565; 610-623; 643-650; 677-702; 747-758; 822-833; 838-845; 988-995; 999-1032; 1113-1131; 1142-1158; 1225-1231; 1246-1258; 1311-1320; 1345-1354; 1371-1392; 1450-1459; 1464-1491; 1524-1532; 1571-1578; 1642-1649; 1668-1678; 1724-1732; 1736-1744; 1814-1831; 1841-1859; 1902-1908; 1926-1935; 1995-2031; 2035-2045; 2050-2070; 2087-2108; 2114-2121; 2199-2210; 2230-2239; 2250-2266 AND 2288-2302</scope>
    <scope>CLEAVAGE OF INITIATOR METHIONINE</scope>
    <scope>ACETYLATION AT ALA-2</scope>
    <scope>IDENTIFICATION BY MASS SPECTROMETRY</scope>
    <source>
        <tissue>Ovarian carcinoma</tissue>
    </source>
</reference>
<reference key="5">
    <citation type="journal article" date="1989" name="Nature">
        <title>Conservation between yeast and man of a protein associated with U5 small nuclear ribonucleoprotein.</title>
        <authorList>
            <person name="Anderson G.J."/>
            <person name="Bach M."/>
            <person name="Luehrmann R."/>
            <person name="Beggs J.D."/>
        </authorList>
    </citation>
    <scope>IDENTIFICATION IN U5 SNRNP COMPLEX</scope>
</reference>
<reference key="6">
    <citation type="journal article" date="1989" name="Proc. Natl. Acad. Sci. U.S.A.">
        <title>20S small nuclear ribonucleoprotein U5 shows a surprisingly complex protein composition.</title>
        <authorList>
            <person name="Bach M."/>
            <person name="Winkelmann G."/>
            <person name="Luehrmann R."/>
        </authorList>
    </citation>
    <scope>IDENTIFICATION IN U5 SNRNP COMPLEX</scope>
</reference>
<reference key="7">
    <citation type="journal article" date="1989" name="Proc. Natl. Acad. Sci. U.S.A.">
        <title>The mammalian analogue of the yeast PRP8 splicing protein is present in the U4/5/6 small nuclear ribonucleoprotein particle and the spliceosome.</title>
        <authorList>
            <person name="Pinto A.L."/>
            <person name="Steitz J.A."/>
        </authorList>
    </citation>
    <scope>IDENTIFICATION IN U5 SNRNP; U5/4/6 SNRNP AND SPLICEOSOME COMPLEXES</scope>
</reference>
<reference key="8">
    <citation type="journal article" date="1990" name="Proc. Natl. Acad. Sci. U.S.A.">
        <title>A mammalian protein of 220 kDa binds pre-mRNAs in the spliceosome: a potential homologue of the yeast PRP8 protein.</title>
        <authorList>
            <person name="Garcia-Blanco M.A."/>
            <person name="Anderson G.J."/>
            <person name="Beggs J."/>
            <person name="Sharp P.A."/>
        </authorList>
    </citation>
    <scope>IDENTIFICATION IN SPLICEOSOME COMPLEX</scope>
    <scope>INTERACTION WITH PRE-MRNA</scope>
</reference>
<reference key="9">
    <citation type="journal article" date="1996" name="J. Biol. Chem.">
        <title>Domain analysis of human U5 RNA. Cap trimethylation, protein binding, and spliceosome assembly.</title>
        <authorList>
            <person name="Hinz M."/>
            <person name="Moore M.J."/>
            <person name="Bindereif A."/>
        </authorList>
    </citation>
    <scope>IDENTIFICATION IN U5 SNRNP COMPLEX</scope>
    <scope>INTERACTION WITH U5 SNRNA</scope>
</reference>
<reference key="10">
    <citation type="journal article" date="1996" name="RNA">
        <title>The canonical GU dinucleotide at the 5' splice site is recognized by p220 of the U5 snRNP within the spliceosome.</title>
        <authorList>
            <person name="Reyes J.L."/>
            <person name="Kois P."/>
            <person name="Konforti B.B."/>
            <person name="Konarska M.M."/>
        </authorList>
    </citation>
    <scope>INTERACTION WITH PRE-MRNA</scope>
</reference>
<reference key="11">
    <citation type="journal article" date="1997" name="EMBO J.">
        <title>Evidence that U5 snRNP recognizes the 3' splice site for catalytic step II in mammals.</title>
        <authorList>
            <person name="Chiara M.D."/>
            <person name="Palandjian L."/>
            <person name="Feld Kramer R."/>
            <person name="Reed R."/>
        </authorList>
    </citation>
    <scope>IDENTIFICATION IN SPLICEOSOME COMPLEX</scope>
    <scope>INTERACTION WITH PRE-MRNA</scope>
</reference>
<reference key="12">
    <citation type="journal article" date="1998" name="Mol. Cell. Biol.">
        <title>The human U5-220kD protein (hPrp8) forms a stable RNA-free complex with several U5-specific proteins, including an RNA unwindase, a homologue of ribosomal elongation factor EF-2, and a novel WD-40 protein.</title>
        <authorList>
            <person name="Achsel T."/>
            <person name="Ahrens K."/>
            <person name="Brahms H."/>
            <person name="Teigelkamp S."/>
            <person name="Luehrmann R."/>
        </authorList>
    </citation>
    <scope>IDENTIFICATION IN U5 SNRP COMPLEX</scope>
    <scope>INTERACTION WITH SNRP116 AND SNRNP40</scope>
</reference>
<reference key="13">
    <citation type="journal article" date="1999" name="RNA">
        <title>The C-terminal region of hPrp8 interacts with the conserved GU dinucleotide at the 5' splice site.</title>
        <authorList>
            <person name="Reyes J.L."/>
            <person name="Gustafson E.H."/>
            <person name="Luo H.R."/>
            <person name="Moore M.J."/>
            <person name="Konarska M.M."/>
        </authorList>
    </citation>
    <scope>INTERACTION WITH PRE-MRNA</scope>
</reference>
<reference key="14">
    <citation type="journal article" date="2000" name="Genes Dev.">
        <title>Pre-mRNA splicing alters mRNP composition: evidence for stable association of proteins at exon-exon junctions.</title>
        <authorList>
            <person name="Le Hir H."/>
            <person name="Moore M.J."/>
            <person name="Maquat L.E."/>
        </authorList>
    </citation>
    <scope>IDENTIFICATION IN A MRNA SPLICING-DEPENDENT EXON JUNCTION COMPLEX (EJC) WITH SRRM1</scope>
</reference>
<reference key="15">
    <citation type="journal article" date="2000" name="J. Biol. Chem.">
        <title>A general approach for identification of RNA-protein cross-linking sites within native human spliceosomal small nuclear ribonucleoproteins (snRNPs). Analysis of RNA-protein contacts in native U1 and U4/U6.U5 snRNPs.</title>
        <authorList>
            <person name="Urlaub H."/>
            <person name="Hartmuth K."/>
            <person name="Kostka S."/>
            <person name="Grelle G."/>
            <person name="Luehrmann R."/>
        </authorList>
    </citation>
    <scope>INTERACTION WITH U5 SNRNA</scope>
</reference>
<reference key="16">
    <citation type="journal article" date="2000" name="Mol. Cell">
        <title>Functional recognition of 5' splice site by U4/U6.U5 tri-snRNP defines a novel ATP-dependent step in early spliceosome assembly.</title>
        <authorList>
            <person name="Maroney P.A."/>
            <person name="Romfo C.M."/>
            <person name="Nilsen T.W."/>
        </authorList>
    </citation>
    <scope>INTERACTION WITH PRE-MRNA</scope>
    <scope>IDENTIFICATION IN U5/4/6 SNRNP COMPLEX</scope>
</reference>
<reference key="17">
    <citation type="journal article" date="2002" name="Mol. Cell. Biol.">
        <title>Human U4/U6.U5 and U4atac/U6atac.U5 tri-snRNPs exhibit similar protein compositions.</title>
        <authorList>
            <person name="Schneider C."/>
            <person name="Will C.L."/>
            <person name="Makarova O.V."/>
            <person name="Makarov E.M."/>
            <person name="Luehrmann R."/>
        </authorList>
    </citation>
    <scope>IDENTIFICATION IN U12-DEPENDENT SPLICEOSOME</scope>
</reference>
<reference key="18">
    <citation type="journal article" date="2003" name="Nature">
        <title>Proteomic characterization of the human centrosome by protein correlation profiling.</title>
        <authorList>
            <person name="Andersen J.S."/>
            <person name="Wilkinson C.J."/>
            <person name="Mayor T."/>
            <person name="Mortensen P."/>
            <person name="Nigg E.A."/>
            <person name="Mann M."/>
        </authorList>
    </citation>
    <scope>IDENTIFICATION BY MASS SPECTROMETRY</scope>
    <source>
        <tissue>Lymphoblast</tissue>
    </source>
</reference>
<reference key="19">
    <citation type="journal article" date="2005" name="RNA">
        <title>Prp8 protein: at the heart of the spliceosome.</title>
        <authorList>
            <person name="Grainger R.J."/>
            <person name="Beggs J.D."/>
        </authorList>
    </citation>
    <scope>REVIEW</scope>
</reference>
<reference key="20">
    <citation type="journal article" date="2006" name="RNA">
        <title>The network of protein-protein interactions within the human U4/U6.U5 tri-snRNP.</title>
        <authorList>
            <person name="Liu S."/>
            <person name="Rauhut R."/>
            <person name="Vornlocher H.-P."/>
            <person name="Luehrmann R."/>
        </authorList>
    </citation>
    <scope>SUBUNIT</scope>
</reference>
<reference key="21">
    <citation type="journal article" date="2007" name="Science">
        <title>ATM and ATR substrate analysis reveals extensive protein networks responsive to DNA damage.</title>
        <authorList>
            <person name="Matsuoka S."/>
            <person name="Ballif B.A."/>
            <person name="Smogorzewska A."/>
            <person name="McDonald E.R. III"/>
            <person name="Hurov K.E."/>
            <person name="Luo J."/>
            <person name="Bakalarski C.E."/>
            <person name="Zhao Z."/>
            <person name="Solimini N."/>
            <person name="Lerenthal Y."/>
            <person name="Shiloh Y."/>
            <person name="Gygi S.P."/>
            <person name="Elledge S.J."/>
        </authorList>
    </citation>
    <scope>IDENTIFICATION BY MASS SPECTROMETRY [LARGE SCALE ANALYSIS]</scope>
    <source>
        <tissue>Embryonic kidney</tissue>
    </source>
</reference>
<reference key="22">
    <citation type="journal article" date="2008" name="J. Proteome Res.">
        <title>Combining protein-based IMAC, peptide-based IMAC, and MudPIT for efficient phosphoproteomic analysis.</title>
        <authorList>
            <person name="Cantin G.T."/>
            <person name="Yi W."/>
            <person name="Lu B."/>
            <person name="Park S.K."/>
            <person name="Xu T."/>
            <person name="Lee J.-D."/>
            <person name="Yates J.R. III"/>
        </authorList>
    </citation>
    <scope>IDENTIFICATION BY MASS SPECTROMETRY [LARGE SCALE ANALYSIS]</scope>
    <source>
        <tissue>Cervix carcinoma</tissue>
    </source>
</reference>
<reference key="23">
    <citation type="journal article" date="2008" name="Proc. Natl. Acad. Sci. U.S.A.">
        <title>A quantitative atlas of mitotic phosphorylation.</title>
        <authorList>
            <person name="Dephoure N."/>
            <person name="Zhou C."/>
            <person name="Villen J."/>
            <person name="Beausoleil S.A."/>
            <person name="Bakalarski C.E."/>
            <person name="Elledge S.J."/>
            <person name="Gygi S.P."/>
        </authorList>
    </citation>
    <scope>IDENTIFICATION BY MASS SPECTROMETRY [LARGE SCALE ANALYSIS]</scope>
    <source>
        <tissue>Cervix carcinoma</tissue>
    </source>
</reference>
<reference key="24">
    <citation type="journal article" date="2009" name="Anal. Chem.">
        <title>Lys-N and trypsin cover complementary parts of the phosphoproteome in a refined SCX-based approach.</title>
        <authorList>
            <person name="Gauci S."/>
            <person name="Helbig A.O."/>
            <person name="Slijper M."/>
            <person name="Krijgsveld J."/>
            <person name="Heck A.J."/>
            <person name="Mohammed S."/>
        </authorList>
    </citation>
    <scope>ACETYLATION [LARGE SCALE ANALYSIS] AT ALA-2</scope>
    <scope>CLEAVAGE OF INITIATOR METHIONINE [LARGE SCALE ANALYSIS]</scope>
    <scope>IDENTIFICATION BY MASS SPECTROMETRY [LARGE SCALE ANALYSIS]</scope>
</reference>
<reference key="25">
    <citation type="journal article" date="2009" name="Science">
        <title>Lysine acetylation targets protein complexes and co-regulates major cellular functions.</title>
        <authorList>
            <person name="Choudhary C."/>
            <person name="Kumar C."/>
            <person name="Gnad F."/>
            <person name="Nielsen M.L."/>
            <person name="Rehman M."/>
            <person name="Walther T.C."/>
            <person name="Olsen J.V."/>
            <person name="Mann M."/>
        </authorList>
    </citation>
    <scope>ACETYLATION [LARGE SCALE ANALYSIS] AT LYS-1463</scope>
    <scope>IDENTIFICATION BY MASS SPECTROMETRY [LARGE SCALE ANALYSIS]</scope>
</reference>
<reference key="26">
    <citation type="journal article" date="2010" name="Genes Dev.">
        <title>The Prp19 complex and the Usp4Sart3 deubiquitinating enzyme control reversible ubiquitination at the spliceosome.</title>
        <authorList>
            <person name="Song E.J."/>
            <person name="Werner S.L."/>
            <person name="Neubauer J."/>
            <person name="Stegmeier F."/>
            <person name="Aspden J."/>
            <person name="Rio D."/>
            <person name="Harper J.W."/>
            <person name="Elledge S.J."/>
            <person name="Kirschner M.W."/>
            <person name="Rape M."/>
        </authorList>
    </citation>
    <scope>FUNCTION</scope>
    <scope>INTERACTION WITH PRPF3</scope>
</reference>
<reference key="27">
    <citation type="journal article" date="2010" name="Sci. Signal.">
        <title>Quantitative phosphoproteomics reveals widespread full phosphorylation site occupancy during mitosis.</title>
        <authorList>
            <person name="Olsen J.V."/>
            <person name="Vermeulen M."/>
            <person name="Santamaria A."/>
            <person name="Kumar C."/>
            <person name="Miller M.L."/>
            <person name="Jensen L.J."/>
            <person name="Gnad F."/>
            <person name="Cox J."/>
            <person name="Jensen T.S."/>
            <person name="Nigg E.A."/>
            <person name="Brunak S."/>
            <person name="Mann M."/>
        </authorList>
    </citation>
    <scope>PHOSPHORYLATION [LARGE SCALE ANALYSIS] AT SER-859</scope>
    <scope>IDENTIFICATION BY MASS SPECTROMETRY [LARGE SCALE ANALYSIS]</scope>
    <source>
        <tissue>Cervix carcinoma</tissue>
    </source>
</reference>
<reference key="28">
    <citation type="journal article" date="2011" name="BMC Syst. Biol.">
        <title>Initial characterization of the human central proteome.</title>
        <authorList>
            <person name="Burkard T.R."/>
            <person name="Planyavsky M."/>
            <person name="Kaupe I."/>
            <person name="Breitwieser F.P."/>
            <person name="Buerckstuemmer T."/>
            <person name="Bennett K.L."/>
            <person name="Superti-Furga G."/>
            <person name="Colinge J."/>
        </authorList>
    </citation>
    <scope>IDENTIFICATION BY MASS SPECTROMETRY [LARGE SCALE ANALYSIS]</scope>
</reference>
<reference key="29">
    <citation type="journal article" date="2012" name="Mol. Cell. Proteomics">
        <title>Comparative large-scale characterisation of plant vs. mammal proteins reveals similar and idiosyncratic N-alpha acetylation features.</title>
        <authorList>
            <person name="Bienvenut W.V."/>
            <person name="Sumpton D."/>
            <person name="Martinez A."/>
            <person name="Lilla S."/>
            <person name="Espagne C."/>
            <person name="Meinnel T."/>
            <person name="Giglione C."/>
        </authorList>
    </citation>
    <scope>ACETYLATION [LARGE SCALE ANALYSIS] AT ALA-2</scope>
    <scope>CLEAVAGE OF INITIATOR METHIONINE [LARGE SCALE ANALYSIS]</scope>
    <scope>IDENTIFICATION BY MASS SPECTROMETRY [LARGE SCALE ANALYSIS]</scope>
</reference>
<reference key="30">
    <citation type="journal article" date="2013" name="J. Proteome Res.">
        <title>Toward a comprehensive characterization of a human cancer cell phosphoproteome.</title>
        <authorList>
            <person name="Zhou H."/>
            <person name="Di Palma S."/>
            <person name="Preisinger C."/>
            <person name="Peng M."/>
            <person name="Polat A.N."/>
            <person name="Heck A.J."/>
            <person name="Mohammed S."/>
        </authorList>
    </citation>
    <scope>PHOSPHORYLATION [LARGE SCALE ANALYSIS] AT SER-1358</scope>
    <scope>IDENTIFICATION BY MASS SPECTROMETRY [LARGE SCALE ANALYSIS]</scope>
    <source>
        <tissue>Erythroleukemia</tissue>
    </source>
</reference>
<reference key="31">
    <citation type="journal article" date="2014" name="J. Proteomics">
        <title>An enzyme assisted RP-RPLC approach for in-depth analysis of human liver phosphoproteome.</title>
        <authorList>
            <person name="Bian Y."/>
            <person name="Song C."/>
            <person name="Cheng K."/>
            <person name="Dong M."/>
            <person name="Wang F."/>
            <person name="Huang J."/>
            <person name="Sun D."/>
            <person name="Wang L."/>
            <person name="Ye M."/>
            <person name="Zou H."/>
        </authorList>
    </citation>
    <scope>IDENTIFICATION BY MASS SPECTROMETRY [LARGE SCALE ANALYSIS]</scope>
    <source>
        <tissue>Liver</tissue>
    </source>
</reference>
<reference key="32">
    <citation type="journal article" date="2014" name="Mol. Cell. Proteomics">
        <title>Immunoaffinity enrichment and mass spectrometry analysis of protein methylation.</title>
        <authorList>
            <person name="Guo A."/>
            <person name="Gu H."/>
            <person name="Zhou J."/>
            <person name="Mulhern D."/>
            <person name="Wang Y."/>
            <person name="Lee K.A."/>
            <person name="Yang V."/>
            <person name="Aguiar M."/>
            <person name="Kornhauser J."/>
            <person name="Jia X."/>
            <person name="Ren J."/>
            <person name="Beausoleil S.A."/>
            <person name="Silva J.C."/>
            <person name="Vemulapalli V."/>
            <person name="Bedford M.T."/>
            <person name="Comb M.J."/>
        </authorList>
    </citation>
    <scope>METHYLATION [LARGE SCALE ANALYSIS] AT LYS-1425</scope>
    <scope>IDENTIFICATION BY MASS SPECTROMETRY [LARGE SCALE ANALYSIS]</scope>
    <source>
        <tissue>Colon carcinoma</tissue>
    </source>
</reference>
<reference key="33">
    <citation type="journal article" date="2015" name="Acta Crystallogr. F">
        <title>Crystallization and biochemical characterization of the human spliceosomal Aar2-Prp8(RNaseH) complex.</title>
        <authorList>
            <person name="Santos K."/>
            <person name="Preussner M."/>
            <person name="Heroven A.C."/>
            <person name="Weber G."/>
        </authorList>
    </citation>
    <scope>CRYSTALLIZATION</scope>
    <scope>INTERACTION WITH AAR2</scope>
</reference>
<reference key="34">
    <citation type="journal article" date="2017" name="Nat. Commun.">
        <title>R2TP/Prefoldin-like component RUVBL1/RUVBL2 directly interacts with ZNHIT2 to regulate assembly of U5 small nuclear ribonucleoprotein.</title>
        <authorList>
            <person name="Cloutier P."/>
            <person name="Poitras C."/>
            <person name="Durand M."/>
            <person name="Hekmat O."/>
            <person name="Fiola-Masson E."/>
            <person name="Bouchard A."/>
            <person name="Faubert D."/>
            <person name="Chabot B."/>
            <person name="Coulombe B."/>
        </authorList>
    </citation>
    <scope>INTERACTION WITH RPAP3 AND URI1</scope>
</reference>
<reference key="35">
    <citation type="journal article" date="2022" name="Exp. Cell Res.">
        <title>C9ORF78 partially localizes to centromeres and plays a role in chromosome segregation.</title>
        <authorList>
            <person name="Koranne R."/>
            <person name="Brown K."/>
            <person name="Vandenbroek H."/>
            <person name="Taylor W.R."/>
        </authorList>
    </citation>
    <scope>INTERACTION WITH C9ORF78</scope>
</reference>
<reference key="36">
    <citation type="journal article" date="2008" name="EMBO J.">
        <title>Structure and function of an RNase H domain at the heart of the spliceosome.</title>
        <authorList>
            <person name="Pena V."/>
            <person name="Rozov A."/>
            <person name="Fabrizio P."/>
            <person name="Luehrmann R."/>
            <person name="Wahl M.C."/>
        </authorList>
    </citation>
    <scope>X-RAY CRYSTALLOGRAPHY (1.95 ANGSTROMS) OF 1760-2016</scope>
    <scope>DOMAIN</scope>
    <scope>LACK OF METAL-BINDING</scope>
</reference>
<reference key="37">
    <citation type="journal article" date="2008" name="Nat. Struct. Mol. Biol.">
        <title>Structural elucidation of a PRP8 core domain from the heart of the spliceosome.</title>
        <authorList>
            <person name="Ritchie D.B."/>
            <person name="Schellenberg M.J."/>
            <person name="Gesner E.M."/>
            <person name="Raithatha S.A."/>
            <person name="Stuart D.T."/>
            <person name="Macmillan A.M."/>
        </authorList>
    </citation>
    <scope>X-RAY CRYSTALLOGRAPHY (1.85 ANGSTROMS) OF 1769-1990</scope>
    <scope>IDENTIFICATION BY MASS SPECTROMETRY</scope>
    <scope>RNA-BINDING</scope>
    <scope>MUTAGENESIS OF VAL-1788 AND THR-1789</scope>
    <scope>LACK OF METAL-BINDING SITE</scope>
</reference>
<reference evidence="46" key="38">
    <citation type="journal article" date="2016" name="Science">
        <title>Molecular architecture of the human U4/U6.U5 tri-snRNP.</title>
        <authorList>
            <person name="Agafonov D.E."/>
            <person name="Kastner B."/>
            <person name="Dybkov O."/>
            <person name="Hofele R.V."/>
            <person name="Liu W.T."/>
            <person name="Urlaub H."/>
            <person name="Luhrmann R."/>
            <person name="Stark H."/>
        </authorList>
    </citation>
    <scope>STRUCTURE BY ELECTRON MICROSCOPY (7.00 ANGSTROMS)</scope>
    <scope>SUBCELLULAR LOCATION</scope>
    <scope>SUBUNIT</scope>
    <scope>IDENTIFICATION BY MASS SPECTROMETRY</scope>
</reference>
<reference evidence="49" key="39">
    <citation type="journal article" date="2017" name="Cell">
        <title>An Atomic Structure of the Human Spliceosome.</title>
        <authorList>
            <person name="Zhang X."/>
            <person name="Yan C."/>
            <person name="Hang J."/>
            <person name="Finci L.I."/>
            <person name="Lei J."/>
            <person name="Shi Y."/>
        </authorList>
    </citation>
    <scope>STRUCTURE BY ELECTRON MICROSCOPY (3.60 ANGSTROMS)</scope>
    <scope>FUNCTION</scope>
    <scope>SUBCELLULAR LOCATION</scope>
    <scope>SUBUNIT</scope>
</reference>
<reference evidence="48" key="40">
    <citation type="journal article" date="2017" name="Cell">
        <title>Cryo-EM Structure of a Pre-catalytic Human Spliceosome Primed for Activation.</title>
        <authorList>
            <person name="Bertram K."/>
            <person name="Agafonov D.E."/>
            <person name="Dybkov O."/>
            <person name="Haselbach D."/>
            <person name="Leelaram M.N."/>
            <person name="Will C.L."/>
            <person name="Urlaub H."/>
            <person name="Kastner B."/>
            <person name="Luhrmann R."/>
            <person name="Stark H."/>
        </authorList>
    </citation>
    <scope>STRUCTURE BY ELECTRON MICROSCOPY (4.50 ANGSTROMS)</scope>
    <scope>FUNCTION</scope>
    <scope>SUBCELLULAR LOCATION</scope>
    <scope>SUBUNIT</scope>
</reference>
<reference evidence="47" key="41">
    <citation type="journal article" date="2017" name="Nature">
        <title>Cryo-EM structure of a human spliceosome activated for step 2 of splicing.</title>
        <authorList>
            <person name="Bertram K."/>
            <person name="Agafonov D.E."/>
            <person name="Liu W.T."/>
            <person name="Dybkov O."/>
            <person name="Will C.L."/>
            <person name="Hartmuth K."/>
            <person name="Urlaub H."/>
            <person name="Kastner B."/>
            <person name="Stark H."/>
            <person name="Luhrmann R."/>
        </authorList>
    </citation>
    <scope>STRUCTURE BY ELECTRON MICROSCOPY (5.90 ANGSTROMS)</scope>
    <scope>FUNCTION</scope>
    <scope>SUBCELLULAR LOCATION</scope>
    <scope>SUBUNIT</scope>
</reference>
<reference evidence="56 57" key="42">
    <citation type="journal article" date="2018" name="Cell">
        <title>Structure and Conformational Dynamics of the Human Spliceosomal Bact Complex.</title>
        <authorList>
            <person name="Haselbach D."/>
            <person name="Komarov I."/>
            <person name="Agafonov D.E."/>
            <person name="Hartmuth K."/>
            <person name="Graf B."/>
            <person name="Dybkov O."/>
            <person name="Urlaub H."/>
            <person name="Kastner B."/>
            <person name="Luhrmann R."/>
            <person name="Stark H."/>
        </authorList>
    </citation>
    <scope>STRUCTURE BY ELECTRON MICROSCOPY (3.40 ANGSTROMS)</scope>
    <scope>FUNCTION</scope>
    <scope>SUBCELLULAR LOCATION</scope>
    <scope>SUBUNIT</scope>
</reference>
<reference evidence="54 55" key="43">
    <citation type="journal article" date="2018" name="Cell Res.">
        <title>Structures of the human pre-catalytic spliceosome and its precursor spliceosome.</title>
        <authorList>
            <person name="Zhan X."/>
            <person name="Yan C."/>
            <person name="Zhang X."/>
            <person name="Lei J."/>
            <person name="Shi Y."/>
        </authorList>
    </citation>
    <scope>STRUCTURE BY ELECTRON MICROSCOPY (3.80 ANGSTROMS)</scope>
    <scope>FUNCTION</scope>
    <scope>SUBCELLULAR LOCATION</scope>
    <scope>SUBUNIT</scope>
</reference>
<reference evidence="51 52 53" key="44">
    <citation type="journal article" date="2018" name="Cell Res.">
        <title>Structure of the human activated spliceosome in three conformational states.</title>
        <authorList>
            <person name="Zhang X."/>
            <person name="Yan C."/>
            <person name="Zhan X."/>
            <person name="Li L."/>
            <person name="Lei J."/>
            <person name="Shi Y."/>
        </authorList>
    </citation>
    <scope>STRUCTURE BY ELECTRON MICROSCOPY (4.90 ANGSTROMS)</scope>
    <scope>FUNCTION</scope>
    <scope>SUBCELLULAR LOCATION</scope>
    <scope>SUBUNIT</scope>
</reference>
<reference evidence="50" key="45">
    <citation type="journal article" date="2018" name="Science">
        <title>Structure of a human catalytic step I spliceosome.</title>
        <authorList>
            <person name="Zhan X."/>
            <person name="Yan C."/>
            <person name="Zhang X."/>
            <person name="Lei J."/>
            <person name="Shi Y."/>
        </authorList>
    </citation>
    <scope>STRUCTURE BY ELECTRON MICROSCOPY (4.10 ANGSTROMS)</scope>
    <scope>FUNCTION</scope>
    <scope>SUBCELLULAR LOCATION</scope>
    <scope>SUBUNIT</scope>
</reference>
<reference evidence="58 59 60" key="46">
    <citation type="journal article" date="2019" name="Cell Res.">
        <title>Structures of the human spliceosomes before and after release of the ligated exon.</title>
        <authorList>
            <person name="Zhang X."/>
            <person name="Zhan X."/>
            <person name="Yan C."/>
            <person name="Zhang W."/>
            <person name="Liu D."/>
            <person name="Lei J."/>
            <person name="Shi Y."/>
        </authorList>
    </citation>
    <scope>STRUCTURE BY ELECTRON MICROSCOPY (2.86 ANGSTROMS)</scope>
    <scope>FUNCTION</scope>
    <scope>SUBUNIT</scope>
    <scope>SUBCELLULAR LOCATION</scope>
</reference>
<reference evidence="61" key="47">
    <citation type="journal article" date="2019" name="Science">
        <title>A human postcatalytic spliceosome structure reveals essential roles of metazoan factors for exon ligation.</title>
        <authorList>
            <person name="Fica S.M."/>
            <person name="Oubridge C."/>
            <person name="Wilkinson M.E."/>
            <person name="Newman A.J."/>
            <person name="Nagai K."/>
        </authorList>
    </citation>
    <scope>STRUCTURE BY ELECTRON MICROSCOPY (3.30 ANGSTROMS)</scope>
    <scope>FUNCTION</scope>
    <scope>SUBCELLULAR LOCATION</scope>
    <scope>SUBUNIT</scope>
</reference>
<reference evidence="63" key="48">
    <citation type="journal article" date="2022" name="Nat. Commun.">
        <title>A multi-factor trafficking site on the spliceosome remodeling enzyme BRR2 recruits C9ORF78 to regulate alternative splicing.</title>
        <authorList>
            <person name="Bergfort A."/>
            <person name="Preussner M."/>
            <person name="Kuropka B."/>
            <person name="Ilik I.A."/>
            <person name="Hilal T."/>
            <person name="Weber G."/>
            <person name="Freund C."/>
            <person name="Aktas T."/>
            <person name="Heyd F."/>
            <person name="Wahl M.C."/>
        </authorList>
    </citation>
    <scope>STRUCTURE BY ELECTRON MICROSCOPY (2.76 ANGSTROMS) OF 2064-2335 IN COMPLEX WITH C9ORF78 AND SNRNP200</scope>
    <scope>INTERACTION WITH C9ORF78 AND SNRNP200</scope>
</reference>
<reference evidence="64" key="49">
    <citation type="journal article" date="2022" name="Nucleic Acids Res.">
        <title>The intrinsically disordered TSSC4 protein acts as a helicase inhibitor, placeholder and multi-interaction coordinator during snRNP assembly and recycling.</title>
        <authorList>
            <person name="Bergfort A."/>
            <person name="Hilal T."/>
            <person name="Kuropka B."/>
            <person name="Ilik I.A."/>
            <person name="Weber G."/>
            <person name="Aktas T."/>
            <person name="Freund C."/>
            <person name="Wahl M.C."/>
        </authorList>
    </citation>
    <scope>STRUCTURE BY ELECTRON MICROSCOPY (3.05 ANGSTROMS) OF 2064-2320 IN COMPLEX WITH TSSC4 AND SNRNP200</scope>
    <scope>INTERACTION WITH TSSC4 AND SNRNP200</scope>
    <scope>DOMAIN</scope>
</reference>
<reference evidence="62" key="50">
    <citation type="journal article" date="2021" name="Science">
        <title>Structure of the activated human minor spliceosome.</title>
        <authorList>
            <person name="Bai R."/>
            <person name="Wan R."/>
            <person name="Wang L."/>
            <person name="Xu K."/>
            <person name="Zhang Q."/>
            <person name="Lei J."/>
            <person name="Shi Y."/>
        </authorList>
    </citation>
    <scope>STRUCTURE BY ELECTRON MICROSCOPY (2.89 ANGSTROMS)</scope>
    <scope>SUBUNIT</scope>
</reference>
<reference key="51">
    <citation type="journal article" date="2001" name="Hum. Mol. Genet.">
        <title>Mutations in the pre-mRNA splicing factor gene PRPC8 in autosomal dominant retinitis pigmentosa (RP13).</title>
        <authorList>
            <person name="McKie A.B."/>
            <person name="McHale J.C."/>
            <person name="Keen T.J."/>
            <person name="Tarttelin E.E."/>
            <person name="Goliath R."/>
            <person name="van Lith-Verhoeven J.J."/>
            <person name="Greenberg J."/>
            <person name="Ramesar R.S."/>
            <person name="Hoyng C.B."/>
            <person name="Cremers F.P."/>
            <person name="Mackey D.A."/>
            <person name="Bhattacharya S.S."/>
            <person name="Bird A.C."/>
            <person name="Markham A.F."/>
            <person name="Inglehearn C.F."/>
        </authorList>
    </citation>
    <scope>VARIANTS RP13 THR-2301; LEU-2304; ARG-2309; PRO-2309; GLY-2310; LYS-2310 AND LEU-2314</scope>
</reference>
<reference key="52">
    <citation type="online journal article" date="2002" name="Invest. Ophthalmol. Vis. Sci. 43:ARVO E-Abstract 791">
        <title>Novel mutations in the PRPC8 gene, encoding a pre-mRNA splicing factor in patients with autosomal dominant retinitis pigmentosa.</title>
        <authorList>
            <person name="De Erkenez A.C."/>
            <person name="Berson E.L."/>
            <person name="Dryja T.P."/>
        </authorList>
    </citation>
    <scope>VARIANTS RP13 GLY-2310 AND ASN-2334</scope>
</reference>
<reference key="53">
    <citation type="journal article" date="2002" name="Ophthalmic Genet.">
        <title>Clinical characterization, linkage analysis, and PRPC8 mutation analysis of a family with autosomal dominant retinitis pigmentosa type 13 (RP13).</title>
        <authorList>
            <person name="van Lith-Verhoeven J.J."/>
            <person name="van der Velde-Visser S.D."/>
            <person name="Sohocki M.M."/>
            <person name="Deutman A.F."/>
            <person name="Brink H.M."/>
            <person name="Cremers F.P."/>
            <person name="Hoyng C.B."/>
        </authorList>
    </citation>
    <scope>VARIANT RP13 LYS-2310</scope>
</reference>
<reference key="54">
    <citation type="journal article" date="2003" name="Invest. Ophthalmol. Vis. Sci.">
        <title>Mutations in the pre-mRNA splicing-factor genes PRPF3, PRPF8, and PRPF31 in Spanish families with autosomal dominant retinitis pigmentosa.</title>
        <authorList>
            <person name="Martinez-Gimeno M."/>
            <person name="Gamundi M.J."/>
            <person name="Hernan I."/>
            <person name="Maseras M."/>
            <person name="Milla E."/>
            <person name="Ayuso C."/>
            <person name="Garcia-Sandoval B."/>
            <person name="Beneyto M."/>
            <person name="Vilela C."/>
            <person name="Baiget M."/>
            <person name="Antinolo G."/>
            <person name="Carballo M."/>
        </authorList>
    </citation>
    <scope>VARIANT RP13 GLY-2310</scope>
</reference>
<reference key="55">
    <citation type="journal article" date="2007" name="Mol. Cell">
        <title>Structure of a multipartite protein-protein interaction domain in splicing factor Prp8 and its link to retinitis pigmentosa.</title>
        <authorList>
            <person name="Pena V."/>
            <person name="Liu S."/>
            <person name="Bujnicki J.M."/>
            <person name="Luehrmann R."/>
            <person name="Wahl M.C."/>
        </authorList>
    </citation>
    <scope>CHARACTERIZATION OF VARIANTS RP13 LEU-2304; PRO-2309; ARG-2309; GLY-2310; LYS-2310 AND LEU-2314</scope>
    <scope>INTERACTION WITH EFTUD2 AND SNRNP200</scope>
</reference>
<proteinExistence type="evidence at protein level"/>